<reference key="1">
    <citation type="journal article" date="2006" name="Comp. Biochem. Physiol.">
        <title>cDNA-derived amino acid sequences of myoglobins from nine species of whales and dolphins.</title>
        <authorList>
            <person name="Iwanami K."/>
            <person name="Mita H."/>
            <person name="Yamamoto Y."/>
            <person name="Fujise Y."/>
            <person name="Yamada T."/>
            <person name="Suzuki T."/>
        </authorList>
    </citation>
    <scope>NUCLEOTIDE SEQUENCE [MRNA]</scope>
</reference>
<reference key="2">
    <citation type="journal article" date="1965" name="Nature">
        <title>Amino-acid sequence of sperm whale myoglobin.</title>
        <authorList>
            <person name="Edmundson A.B."/>
        </authorList>
    </citation>
    <scope>PROTEIN SEQUENCE OF 2-154</scope>
    <source>
        <tissue>Heart muscle</tissue>
    </source>
</reference>
<reference key="3">
    <citation type="journal article" date="1974" name="Biochim. Biophys. Acta">
        <title>Residue 122 of sperm whale and horse myoglobin.</title>
        <authorList>
            <person name="Romero-Herrera A.E."/>
            <person name="Lehmann H."/>
        </authorList>
    </citation>
    <scope>SEQUENCE REVISION TO 123</scope>
    <source>
        <tissue>Skeletal muscle</tissue>
    </source>
</reference>
<reference key="4">
    <citation type="journal article" date="1999" name="J. Biol. Chem.">
        <title>Effects of the location of distal histidine in the reaction of myoglobin with hydrogen peroxide.</title>
        <authorList>
            <person name="Matsui T."/>
            <person name="Ozaki S.I."/>
            <person name="Liong E."/>
            <person name="Phillips G.N. Jr."/>
            <person name="Watanabe Y."/>
        </authorList>
    </citation>
    <scope>SUBUNIT</scope>
</reference>
<reference evidence="13 14" key="5">
    <citation type="journal article" date="1977" name="J. Mol. Biol.">
        <title>Structure of myoglobin refined at 2.0-A resolution. I. Crystallographic refinement of metmyoglobin from sperm whale.</title>
        <authorList>
            <person name="Takano T."/>
        </authorList>
    </citation>
    <scope>X-RAY CRYSTALLOGRAPHY (2.0 ANGSTROMS) OF METMYOGLOBIN</scope>
</reference>
<reference key="6">
    <citation type="journal article" date="1977" name="J. Mol. Biol.">
        <title>Structure of myoglobin refined at 2.0-A resolution. II. Structure of deoxymyoglobin from sperm whale.</title>
        <authorList>
            <person name="Takano T."/>
        </authorList>
    </citation>
    <scope>X-RAY CRYSTALLOGRAPHY (2.0 ANGSTROMS) OF DEOXYMYOGLOBIN</scope>
</reference>
<reference evidence="12" key="7">
    <citation type="journal article" date="1980" name="J. Mol. Biol.">
        <title>Structure and refinement of oxymyoglobin at 1.6-A resolution.</title>
        <authorList>
            <person name="Phillips S.E.V."/>
        </authorList>
    </citation>
    <scope>X-RAY CRYSTALLOGRAPHY (1.6 ANGSTROMS) OF OXYMYOGLOBIN</scope>
</reference>
<reference key="8">
    <citation type="journal article" date="1991" name="J. Mol. Biol.">
        <title>X-ray crystal structure of the ferric sperm whale myoglobin: imidazole complex at 2.0-A resolution.</title>
        <authorList>
            <person name="Lionetti C."/>
            <person name="Guanziroli M.G."/>
            <person name="Frigerio F."/>
            <person name="Ascenzi P."/>
            <person name="Bolognesi M."/>
        </authorList>
    </citation>
    <scope>X-RAY CRYSTALLOGRAPHY (2.0 ANGSTROMS)</scope>
</reference>
<reference key="9">
    <citation type="journal article" date="1999" name="Biophys. J.">
        <title>Structural dynamics of ligand diffusion in the protein matrix: a study on a new myoglobin mutant Y(B10) Q(E7) R(E10).</title>
        <authorList>
            <person name="Brunori M."/>
            <person name="Cutruzzola F."/>
            <person name="Savino C."/>
            <person name="Travaglini-Allocatelli C."/>
            <person name="Vallone B."/>
            <person name="Gibson Q.H."/>
        </authorList>
    </citation>
    <scope>X-RAY CRYSTALLOGRAPHY (1.7 ANGSTROMS)</scope>
</reference>
<reference key="10">
    <citation type="journal article" date="2000" name="Proc. Natl. Acad. Sci. U.S.A.">
        <title>The role of cavities in protein dynamics: crystal structure of a photolytic intermediate of a mutant myoglobin.</title>
        <authorList>
            <person name="Brunori M."/>
            <person name="Vallone B."/>
            <person name="Cutruzzola F."/>
            <person name="Travaglini-Allocatelli C."/>
            <person name="Berendzen J."/>
            <person name="Chu K."/>
            <person name="Sweet R.M."/>
            <person name="Schlichting I."/>
        </authorList>
    </citation>
    <scope>X-RAY CRYSTALLOGRAPHY (1.4 ANGSTROMS)</scope>
</reference>
<evidence type="ECO:0000250" key="1">
    <source>
        <dbReference type="UniProtKB" id="P02144"/>
    </source>
</evidence>
<evidence type="ECO:0000250" key="2">
    <source>
        <dbReference type="UniProtKB" id="P04247"/>
    </source>
</evidence>
<evidence type="ECO:0000250" key="3">
    <source>
        <dbReference type="UniProtKB" id="P68082"/>
    </source>
</evidence>
<evidence type="ECO:0000250" key="4">
    <source>
        <dbReference type="UniProtKB" id="Q9QZ76"/>
    </source>
</evidence>
<evidence type="ECO:0000255" key="5">
    <source>
        <dbReference type="PROSITE-ProRule" id="PRU00238"/>
    </source>
</evidence>
<evidence type="ECO:0000269" key="6">
    <source>
    </source>
</evidence>
<evidence type="ECO:0000269" key="7">
    <source>
    </source>
</evidence>
<evidence type="ECO:0000269" key="8">
    <source>
    </source>
</evidence>
<evidence type="ECO:0000269" key="9">
    <source ref="2"/>
</evidence>
<evidence type="ECO:0000303" key="10">
    <source>
    </source>
</evidence>
<evidence type="ECO:0000305" key="11"/>
<evidence type="ECO:0007744" key="12">
    <source>
        <dbReference type="PDB" id="1MBO"/>
    </source>
</evidence>
<evidence type="ECO:0007744" key="13">
    <source>
        <dbReference type="PDB" id="4MBN"/>
    </source>
</evidence>
<evidence type="ECO:0007744" key="14">
    <source>
        <dbReference type="PDB" id="5MBN"/>
    </source>
</evidence>
<evidence type="ECO:0007829" key="15">
    <source>
        <dbReference type="PDB" id="1MYF"/>
    </source>
</evidence>
<evidence type="ECO:0007829" key="16">
    <source>
        <dbReference type="PDB" id="5YCE"/>
    </source>
</evidence>
<evidence type="ECO:0007829" key="17">
    <source>
        <dbReference type="PDB" id="7VDN"/>
    </source>
</evidence>
<evidence type="ECO:0007829" key="18">
    <source>
        <dbReference type="PDB" id="7YLK"/>
    </source>
</evidence>
<protein>
    <recommendedName>
        <fullName evidence="10">Myoglobin</fullName>
    </recommendedName>
    <alternativeName>
        <fullName evidence="1">Nitrite reductase MB</fullName>
        <ecNumber evidence="1">1.7.-.-</ecNumber>
    </alternativeName>
    <alternativeName>
        <fullName evidence="1">Pseudoperoxidase MB</fullName>
        <ecNumber evidence="1">1.11.1.-</ecNumber>
    </alternativeName>
</protein>
<name>MYG_PHYMC</name>
<gene>
    <name type="primary">MB</name>
</gene>
<sequence>MVLSEGEWQLVLHVWAKVEADVAGHGQDILIRLFKSHPETLEKFDRFKHLKTEAEMKASEDLKKHGVTVLTALGAILKKKGHHEAELKPLAQSHATKHKIPIKYLEFISEAIIHVLHSRHPGDFGADAQGAMNKALELFRKDIAAKYKELGYQG</sequence>
<organism>
    <name type="scientific">Physeter macrocephalus</name>
    <name type="common">Sperm whale</name>
    <name type="synonym">Physeter catodon</name>
    <dbReference type="NCBI Taxonomy" id="9755"/>
    <lineage>
        <taxon>Eukaryota</taxon>
        <taxon>Metazoa</taxon>
        <taxon>Chordata</taxon>
        <taxon>Craniata</taxon>
        <taxon>Vertebrata</taxon>
        <taxon>Euteleostomi</taxon>
        <taxon>Mammalia</taxon>
        <taxon>Eutheria</taxon>
        <taxon>Laurasiatheria</taxon>
        <taxon>Artiodactyla</taxon>
        <taxon>Whippomorpha</taxon>
        <taxon>Cetacea</taxon>
        <taxon>Odontoceti</taxon>
        <taxon>Physeteridae</taxon>
        <taxon>Physeter</taxon>
    </lineage>
</organism>
<proteinExistence type="evidence at protein level"/>
<dbReference type="EC" id="1.7.-.-" evidence="1"/>
<dbReference type="EC" id="1.11.1.-" evidence="1"/>
<dbReference type="EMBL" id="AB271144">
    <property type="protein sequence ID" value="BAF03579.1"/>
    <property type="molecule type" value="mRNA"/>
</dbReference>
<dbReference type="PIR" id="A90591">
    <property type="entry name" value="MYWHP"/>
</dbReference>
<dbReference type="RefSeq" id="NP_001277651.1">
    <property type="nucleotide sequence ID" value="NM_001290722.1"/>
</dbReference>
<dbReference type="PDB" id="101M">
    <property type="method" value="X-ray"/>
    <property type="resolution" value="2.07 A"/>
    <property type="chains" value="A=1-154"/>
</dbReference>
<dbReference type="PDB" id="102M">
    <property type="method" value="X-ray"/>
    <property type="resolution" value="1.84 A"/>
    <property type="chains" value="A=1-154"/>
</dbReference>
<dbReference type="PDB" id="103M">
    <property type="method" value="X-ray"/>
    <property type="resolution" value="2.07 A"/>
    <property type="chains" value="A=1-154"/>
</dbReference>
<dbReference type="PDB" id="104M">
    <property type="method" value="X-ray"/>
    <property type="resolution" value="1.71 A"/>
    <property type="chains" value="A=2-154"/>
</dbReference>
<dbReference type="PDB" id="105M">
    <property type="method" value="X-ray"/>
    <property type="resolution" value="2.02 A"/>
    <property type="chains" value="A=2-154"/>
</dbReference>
<dbReference type="PDB" id="106M">
    <property type="method" value="X-ray"/>
    <property type="resolution" value="1.99 A"/>
    <property type="chains" value="A=1-154"/>
</dbReference>
<dbReference type="PDB" id="107M">
    <property type="method" value="X-ray"/>
    <property type="resolution" value="2.09 A"/>
    <property type="chains" value="A=1-154"/>
</dbReference>
<dbReference type="PDB" id="108M">
    <property type="method" value="X-ray"/>
    <property type="resolution" value="2.67 A"/>
    <property type="chains" value="A=1-154"/>
</dbReference>
<dbReference type="PDB" id="109M">
    <property type="method" value="X-ray"/>
    <property type="resolution" value="1.83 A"/>
    <property type="chains" value="A=1-154"/>
</dbReference>
<dbReference type="PDB" id="110M">
    <property type="method" value="X-ray"/>
    <property type="resolution" value="1.77 A"/>
    <property type="chains" value="A=1-154"/>
</dbReference>
<dbReference type="PDB" id="111M">
    <property type="method" value="X-ray"/>
    <property type="resolution" value="1.88 A"/>
    <property type="chains" value="A=1-154"/>
</dbReference>
<dbReference type="PDB" id="112M">
    <property type="method" value="X-ray"/>
    <property type="resolution" value="2.34 A"/>
    <property type="chains" value="A=1-154"/>
</dbReference>
<dbReference type="PDB" id="1A6G">
    <property type="method" value="X-ray"/>
    <property type="resolution" value="1.15 A"/>
    <property type="chains" value="A=2-152"/>
</dbReference>
<dbReference type="PDB" id="1A6K">
    <property type="method" value="X-ray"/>
    <property type="resolution" value="1.10 A"/>
    <property type="chains" value="A=2-152"/>
</dbReference>
<dbReference type="PDB" id="1A6M">
    <property type="method" value="X-ray"/>
    <property type="resolution" value="1.00 A"/>
    <property type="chains" value="A=2-152"/>
</dbReference>
<dbReference type="PDB" id="1A6N">
    <property type="method" value="X-ray"/>
    <property type="resolution" value="1.15 A"/>
    <property type="chains" value="A=2-152"/>
</dbReference>
<dbReference type="PDB" id="1ABS">
    <property type="method" value="X-ray"/>
    <property type="resolution" value="1.50 A"/>
    <property type="chains" value="A=1-154"/>
</dbReference>
<dbReference type="PDB" id="1AJG">
    <property type="method" value="X-ray"/>
    <property type="resolution" value="1.69 A"/>
    <property type="chains" value="A=2-154"/>
</dbReference>
<dbReference type="PDB" id="1AJH">
    <property type="method" value="X-ray"/>
    <property type="resolution" value="1.69 A"/>
    <property type="chains" value="A=2-154"/>
</dbReference>
<dbReference type="PDB" id="1BVC">
    <property type="method" value="X-ray"/>
    <property type="resolution" value="1.50 A"/>
    <property type="chains" value="A=2-154"/>
</dbReference>
<dbReference type="PDB" id="1BVD">
    <property type="method" value="X-ray"/>
    <property type="resolution" value="1.40 A"/>
    <property type="chains" value="A=2-154"/>
</dbReference>
<dbReference type="PDB" id="1BZ6">
    <property type="method" value="X-ray"/>
    <property type="resolution" value="1.20 A"/>
    <property type="chains" value="A=2-154"/>
</dbReference>
<dbReference type="PDB" id="1BZP">
    <property type="method" value="X-ray"/>
    <property type="resolution" value="1.15 A"/>
    <property type="chains" value="A=2-154"/>
</dbReference>
<dbReference type="PDB" id="1BZR">
    <property type="method" value="X-ray"/>
    <property type="resolution" value="1.15 A"/>
    <property type="chains" value="A=2-154"/>
</dbReference>
<dbReference type="PDB" id="1CH1">
    <property type="method" value="X-ray"/>
    <property type="resolution" value="1.90 A"/>
    <property type="chains" value="A=1-154"/>
</dbReference>
<dbReference type="PDB" id="1CH2">
    <property type="method" value="X-ray"/>
    <property type="resolution" value="1.80 A"/>
    <property type="chains" value="A=2-154"/>
</dbReference>
<dbReference type="PDB" id="1CH3">
    <property type="method" value="X-ray"/>
    <property type="resolution" value="2.00 A"/>
    <property type="chains" value="A=2-154"/>
</dbReference>
<dbReference type="PDB" id="1CH5">
    <property type="method" value="X-ray"/>
    <property type="resolution" value="2.10 A"/>
    <property type="chains" value="A=2-154"/>
</dbReference>
<dbReference type="PDB" id="1CH7">
    <property type="method" value="X-ray"/>
    <property type="resolution" value="1.90 A"/>
    <property type="chains" value="A=2-154"/>
</dbReference>
<dbReference type="PDB" id="1CH9">
    <property type="method" value="X-ray"/>
    <property type="resolution" value="1.80 A"/>
    <property type="chains" value="A=2-154"/>
</dbReference>
<dbReference type="PDB" id="1CIK">
    <property type="method" value="X-ray"/>
    <property type="resolution" value="1.70 A"/>
    <property type="chains" value="A=2-154"/>
</dbReference>
<dbReference type="PDB" id="1CIO">
    <property type="method" value="X-ray"/>
    <property type="resolution" value="1.60 A"/>
    <property type="chains" value="A=2-154"/>
</dbReference>
<dbReference type="PDB" id="1CO8">
    <property type="method" value="X-ray"/>
    <property type="resolution" value="1.80 A"/>
    <property type="chains" value="A=1-154"/>
</dbReference>
<dbReference type="PDB" id="1CO9">
    <property type="method" value="X-ray"/>
    <property type="resolution" value="1.60 A"/>
    <property type="chains" value="A=1-154"/>
</dbReference>
<dbReference type="PDB" id="1CP0">
    <property type="method" value="X-ray"/>
    <property type="resolution" value="2.00 A"/>
    <property type="chains" value="A=1-154"/>
</dbReference>
<dbReference type="PDB" id="1CP5">
    <property type="method" value="X-ray"/>
    <property type="resolution" value="2.10 A"/>
    <property type="chains" value="A=1-154"/>
</dbReference>
<dbReference type="PDB" id="1CPW">
    <property type="method" value="X-ray"/>
    <property type="resolution" value="2.20 A"/>
    <property type="chains" value="A=1-154"/>
</dbReference>
<dbReference type="PDB" id="1CQ2">
    <property type="method" value="Neutron"/>
    <property type="resolution" value="2.00 A"/>
    <property type="chains" value="A=2-154"/>
</dbReference>
<dbReference type="PDB" id="1DO1">
    <property type="method" value="X-ray"/>
    <property type="resolution" value="1.50 A"/>
    <property type="chains" value="A=1-154"/>
</dbReference>
<dbReference type="PDB" id="1DO3">
    <property type="method" value="X-ray"/>
    <property type="resolution" value="1.55 A"/>
    <property type="chains" value="A=1-154"/>
</dbReference>
<dbReference type="PDB" id="1DO4">
    <property type="method" value="X-ray"/>
    <property type="resolution" value="1.70 A"/>
    <property type="chains" value="A=1-154"/>
</dbReference>
<dbReference type="PDB" id="1DO7">
    <property type="method" value="X-ray"/>
    <property type="resolution" value="1.85 A"/>
    <property type="chains" value="A=1-154"/>
</dbReference>
<dbReference type="PDB" id="1DTI">
    <property type="method" value="X-ray"/>
    <property type="resolution" value="1.70 A"/>
    <property type="chains" value="A=1-154"/>
</dbReference>
<dbReference type="PDB" id="1DTM">
    <property type="method" value="X-ray"/>
    <property type="resolution" value="2.13 A"/>
    <property type="chains" value="A=2-154"/>
</dbReference>
<dbReference type="PDB" id="1DUK">
    <property type="method" value="X-ray"/>
    <property type="resolution" value="2.13 A"/>
    <property type="chains" value="A=2-154"/>
</dbReference>
<dbReference type="PDB" id="1DUO">
    <property type="method" value="X-ray"/>
    <property type="resolution" value="2.00 A"/>
    <property type="chains" value="A=2-154"/>
</dbReference>
<dbReference type="PDB" id="1DXC">
    <property type="method" value="X-ray"/>
    <property type="resolution" value="1.40 A"/>
    <property type="chains" value="A=1-154"/>
</dbReference>
<dbReference type="PDB" id="1DXD">
    <property type="method" value="X-ray"/>
    <property type="resolution" value="1.40 A"/>
    <property type="chains" value="A=1-154"/>
</dbReference>
<dbReference type="PDB" id="1EBC">
    <property type="method" value="X-ray"/>
    <property type="resolution" value="1.80 A"/>
    <property type="chains" value="A=2-154"/>
</dbReference>
<dbReference type="PDB" id="1F63">
    <property type="method" value="X-ray"/>
    <property type="resolution" value="1.80 A"/>
    <property type="chains" value="A=1-154"/>
</dbReference>
<dbReference type="PDB" id="1F65">
    <property type="method" value="X-ray"/>
    <property type="resolution" value="1.70 A"/>
    <property type="chains" value="A=1-154"/>
</dbReference>
<dbReference type="PDB" id="1F6H">
    <property type="method" value="X-ray"/>
    <property type="resolution" value="3.31 A"/>
    <property type="chains" value="A=2-154"/>
</dbReference>
<dbReference type="PDB" id="1FCS">
    <property type="method" value="X-ray"/>
    <property type="resolution" value="1.60 A"/>
    <property type="chains" value="A=1-154"/>
</dbReference>
<dbReference type="PDB" id="1H1X">
    <property type="method" value="X-ray"/>
    <property type="resolution" value="1.40 A"/>
    <property type="chains" value="A=2-154"/>
</dbReference>
<dbReference type="PDB" id="1HJT">
    <property type="method" value="X-ray"/>
    <property type="resolution" value="1.70 A"/>
    <property type="chains" value="A=2-154"/>
</dbReference>
<dbReference type="PDB" id="1IOP">
    <property type="method" value="X-ray"/>
    <property type="resolution" value="1.90 A"/>
    <property type="chains" value="A=2-154"/>
</dbReference>
<dbReference type="PDB" id="1IRC">
    <property type="method" value="X-ray"/>
    <property type="resolution" value="2.17 A"/>
    <property type="chains" value="A=1-154"/>
</dbReference>
<dbReference type="PDB" id="1J3F">
    <property type="method" value="X-ray"/>
    <property type="resolution" value="1.45 A"/>
    <property type="chains" value="A=1-154"/>
</dbReference>
<dbReference type="PDB" id="1J52">
    <property type="method" value="X-ray"/>
    <property type="resolution" value="1.90 A"/>
    <property type="chains" value="A=1-154"/>
</dbReference>
<dbReference type="PDB" id="1JDO">
    <property type="method" value="X-ray"/>
    <property type="resolution" value="1.90 A"/>
    <property type="chains" value="A=1-154"/>
</dbReference>
<dbReference type="PDB" id="1JP6">
    <property type="method" value="X-ray"/>
    <property type="resolution" value="2.30 A"/>
    <property type="chains" value="A=2-154"/>
</dbReference>
<dbReference type="PDB" id="1JP8">
    <property type="method" value="X-ray"/>
    <property type="resolution" value="2.30 A"/>
    <property type="chains" value="A=2-154"/>
</dbReference>
<dbReference type="PDB" id="1JP9">
    <property type="method" value="X-ray"/>
    <property type="resolution" value="1.70 A"/>
    <property type="chains" value="A=2-154"/>
</dbReference>
<dbReference type="PDB" id="1JPB">
    <property type="method" value="X-ray"/>
    <property type="resolution" value="1.70 A"/>
    <property type="chains" value="A=2-154"/>
</dbReference>
<dbReference type="PDB" id="1JW8">
    <property type="method" value="X-ray"/>
    <property type="resolution" value="1.30 A"/>
    <property type="chains" value="A=1-154"/>
</dbReference>
<dbReference type="PDB" id="1L2K">
    <property type="method" value="Neutron"/>
    <property type="resolution" value="1.50 A"/>
    <property type="chains" value="A=2-154"/>
</dbReference>
<dbReference type="PDB" id="1LTW">
    <property type="method" value="X-ray"/>
    <property type="resolution" value="1.70 A"/>
    <property type="chains" value="A=1-154"/>
</dbReference>
<dbReference type="PDB" id="1LUE">
    <property type="method" value="X-ray"/>
    <property type="resolution" value="1.70 A"/>
    <property type="chains" value="A=1-154"/>
</dbReference>
<dbReference type="PDB" id="1MBC">
    <property type="method" value="X-ray"/>
    <property type="resolution" value="1.50 A"/>
    <property type="chains" value="A=2-154"/>
</dbReference>
<dbReference type="PDB" id="1MBD">
    <property type="method" value="X-ray"/>
    <property type="resolution" value="1.40 A"/>
    <property type="chains" value="A=2-154"/>
</dbReference>
<dbReference type="PDB" id="1MBI">
    <property type="method" value="X-ray"/>
    <property type="resolution" value="2.00 A"/>
    <property type="chains" value="A=2-154"/>
</dbReference>
<dbReference type="PDB" id="1MBN">
    <property type="method" value="X-ray"/>
    <property type="resolution" value="2.00 A"/>
    <property type="chains" value="A=2-154"/>
</dbReference>
<dbReference type="PDB" id="1MBO">
    <property type="method" value="X-ray"/>
    <property type="resolution" value="1.60 A"/>
    <property type="chains" value="A=2-154"/>
</dbReference>
<dbReference type="PDB" id="1MCY">
    <property type="method" value="X-ray"/>
    <property type="resolution" value="1.70 A"/>
    <property type="chains" value="A=1-154"/>
</dbReference>
<dbReference type="PDB" id="1MGN">
    <property type="method" value="X-ray"/>
    <property type="resolution" value="1.90 A"/>
    <property type="chains" value="A=1-154"/>
</dbReference>
<dbReference type="PDB" id="1MLF">
    <property type="method" value="X-ray"/>
    <property type="resolution" value="2.00 A"/>
    <property type="chains" value="A=1-154"/>
</dbReference>
<dbReference type="PDB" id="1MLG">
    <property type="method" value="X-ray"/>
    <property type="resolution" value="2.00 A"/>
    <property type="chains" value="A=1-154"/>
</dbReference>
<dbReference type="PDB" id="1MLH">
    <property type="method" value="X-ray"/>
    <property type="resolution" value="2.00 A"/>
    <property type="chains" value="A=1-154"/>
</dbReference>
<dbReference type="PDB" id="1MLJ">
    <property type="method" value="X-ray"/>
    <property type="resolution" value="2.00 A"/>
    <property type="chains" value="A=1-154"/>
</dbReference>
<dbReference type="PDB" id="1MLK">
    <property type="method" value="X-ray"/>
    <property type="resolution" value="1.80 A"/>
    <property type="chains" value="A=1-154"/>
</dbReference>
<dbReference type="PDB" id="1MLL">
    <property type="method" value="X-ray"/>
    <property type="resolution" value="1.70 A"/>
    <property type="chains" value="A=1-154"/>
</dbReference>
<dbReference type="PDB" id="1MLM">
    <property type="method" value="X-ray"/>
    <property type="resolution" value="1.80 A"/>
    <property type="chains" value="A=1-154"/>
</dbReference>
<dbReference type="PDB" id="1MLN">
    <property type="method" value="X-ray"/>
    <property type="resolution" value="2.00 A"/>
    <property type="chains" value="A=1-154"/>
</dbReference>
<dbReference type="PDB" id="1MLO">
    <property type="method" value="X-ray"/>
    <property type="resolution" value="1.80 A"/>
    <property type="chains" value="A=1-154"/>
</dbReference>
<dbReference type="PDB" id="1MLQ">
    <property type="method" value="X-ray"/>
    <property type="resolution" value="2.00 A"/>
    <property type="chains" value="A=1-154"/>
</dbReference>
<dbReference type="PDB" id="1MLR">
    <property type="method" value="X-ray"/>
    <property type="resolution" value="2.00 A"/>
    <property type="chains" value="A=1-154"/>
</dbReference>
<dbReference type="PDB" id="1MLS">
    <property type="method" value="X-ray"/>
    <property type="resolution" value="1.70 A"/>
    <property type="chains" value="A=1-154"/>
</dbReference>
<dbReference type="PDB" id="1MLU">
    <property type="method" value="X-ray"/>
    <property type="resolution" value="1.90 A"/>
    <property type="chains" value="A=1-154"/>
</dbReference>
<dbReference type="PDB" id="1MOA">
    <property type="method" value="X-ray"/>
    <property type="resolution" value="1.90 A"/>
    <property type="chains" value="A=1-154"/>
</dbReference>
<dbReference type="PDB" id="1MOB">
    <property type="method" value="X-ray"/>
    <property type="resolution" value="2.20 A"/>
    <property type="chains" value="A=1-154"/>
</dbReference>
<dbReference type="PDB" id="1MOC">
    <property type="method" value="X-ray"/>
    <property type="resolution" value="2.00 A"/>
    <property type="chains" value="A=1-154"/>
</dbReference>
<dbReference type="PDB" id="1MOD">
    <property type="method" value="X-ray"/>
    <property type="resolution" value="2.00 A"/>
    <property type="chains" value="A=1-154"/>
</dbReference>
<dbReference type="PDB" id="1MTI">
    <property type="method" value="X-ray"/>
    <property type="resolution" value="1.90 A"/>
    <property type="chains" value="A=1-154"/>
</dbReference>
<dbReference type="PDB" id="1MTJ">
    <property type="method" value="X-ray"/>
    <property type="resolution" value="1.70 A"/>
    <property type="chains" value="A=1-154"/>
</dbReference>
<dbReference type="PDB" id="1MTK">
    <property type="method" value="X-ray"/>
    <property type="resolution" value="1.80 A"/>
    <property type="chains" value="A=1-154"/>
</dbReference>
<dbReference type="PDB" id="1MYF">
    <property type="method" value="NMR"/>
    <property type="chains" value="A=2-154"/>
</dbReference>
<dbReference type="PDB" id="1MYM">
    <property type="method" value="X-ray"/>
    <property type="resolution" value="1.70 A"/>
    <property type="chains" value="A=1-154"/>
</dbReference>
<dbReference type="PDB" id="1MYZ">
    <property type="method" value="X-ray"/>
    <property type="resolution" value="1.60 A"/>
    <property type="chains" value="A=1-154"/>
</dbReference>
<dbReference type="PDB" id="1MZ0">
    <property type="method" value="X-ray"/>
    <property type="resolution" value="1.60 A"/>
    <property type="chains" value="A=1-154"/>
</dbReference>
<dbReference type="PDB" id="1N9F">
    <property type="method" value="X-ray"/>
    <property type="resolution" value="1.80 A"/>
    <property type="chains" value="A=1-154"/>
</dbReference>
<dbReference type="PDB" id="1N9H">
    <property type="method" value="X-ray"/>
    <property type="resolution" value="1.80 A"/>
    <property type="chains" value="A=1-154"/>
</dbReference>
<dbReference type="PDB" id="1N9I">
    <property type="method" value="X-ray"/>
    <property type="resolution" value="1.60 A"/>
    <property type="chains" value="A=1-154"/>
</dbReference>
<dbReference type="PDB" id="1N9X">
    <property type="method" value="X-ray"/>
    <property type="resolution" value="1.60 A"/>
    <property type="chains" value="A=1-154"/>
</dbReference>
<dbReference type="PDB" id="1NAZ">
    <property type="method" value="X-ray"/>
    <property type="resolution" value="1.04 A"/>
    <property type="chains" value="A=1-154"/>
</dbReference>
<dbReference type="PDB" id="1O16">
    <property type="method" value="X-ray"/>
    <property type="resolution" value="1.95 A"/>
    <property type="chains" value="A=1-154"/>
</dbReference>
<dbReference type="PDB" id="1OBM">
    <property type="method" value="X-ray"/>
    <property type="resolution" value="1.85 A"/>
    <property type="chains" value="A=1-154"/>
</dbReference>
<dbReference type="PDB" id="1OFJ">
    <property type="method" value="X-ray"/>
    <property type="resolution" value="1.80 A"/>
    <property type="chains" value="A=1-154"/>
</dbReference>
<dbReference type="PDB" id="1OFK">
    <property type="method" value="X-ray"/>
    <property type="resolution" value="1.80 A"/>
    <property type="chains" value="A=1-154"/>
</dbReference>
<dbReference type="PDB" id="1SPE">
    <property type="method" value="X-ray"/>
    <property type="resolution" value="2.00 A"/>
    <property type="chains" value="A=2-154"/>
</dbReference>
<dbReference type="PDB" id="1SWM">
    <property type="method" value="X-ray"/>
    <property type="resolution" value="1.80 A"/>
    <property type="chains" value="A=2-154"/>
</dbReference>
<dbReference type="PDB" id="1TES">
    <property type="method" value="X-ray"/>
    <property type="resolution" value="1.70 A"/>
    <property type="chains" value="A=1-154"/>
</dbReference>
<dbReference type="PDB" id="1U7R">
    <property type="method" value="X-ray"/>
    <property type="resolution" value="1.15 A"/>
    <property type="chains" value="A=2-154"/>
</dbReference>
<dbReference type="PDB" id="1U7S">
    <property type="method" value="X-ray"/>
    <property type="resolution" value="1.40 A"/>
    <property type="chains" value="A=2-154"/>
</dbReference>
<dbReference type="PDB" id="1UFJ">
    <property type="method" value="X-ray"/>
    <property type="resolution" value="1.60 A"/>
    <property type="chains" value="A=1-154"/>
</dbReference>
<dbReference type="PDB" id="1UFP">
    <property type="method" value="X-ray"/>
    <property type="resolution" value="2.10 A"/>
    <property type="chains" value="A=1-154"/>
</dbReference>
<dbReference type="PDB" id="1V9Q">
    <property type="method" value="X-ray"/>
    <property type="resolution" value="1.45 A"/>
    <property type="chains" value="A=1-154"/>
</dbReference>
<dbReference type="PDB" id="1VXA">
    <property type="method" value="X-ray"/>
    <property type="resolution" value="2.00 A"/>
    <property type="chains" value="A=2-154"/>
</dbReference>
<dbReference type="PDB" id="1VXB">
    <property type="method" value="X-ray"/>
    <property type="resolution" value="2.00 A"/>
    <property type="chains" value="A=2-154"/>
</dbReference>
<dbReference type="PDB" id="1VXC">
    <property type="method" value="X-ray"/>
    <property type="resolution" value="1.70 A"/>
    <property type="chains" value="A=2-154"/>
</dbReference>
<dbReference type="PDB" id="1VXD">
    <property type="method" value="X-ray"/>
    <property type="resolution" value="1.70 A"/>
    <property type="chains" value="A=2-154"/>
</dbReference>
<dbReference type="PDB" id="1VXE">
    <property type="method" value="X-ray"/>
    <property type="resolution" value="1.70 A"/>
    <property type="chains" value="A=2-154"/>
</dbReference>
<dbReference type="PDB" id="1VXF">
    <property type="method" value="X-ray"/>
    <property type="resolution" value="1.70 A"/>
    <property type="chains" value="A=2-154"/>
</dbReference>
<dbReference type="PDB" id="1VXG">
    <property type="method" value="X-ray"/>
    <property type="resolution" value="1.70 A"/>
    <property type="chains" value="A=2-154"/>
</dbReference>
<dbReference type="PDB" id="1VXH">
    <property type="method" value="X-ray"/>
    <property type="resolution" value="1.70 A"/>
    <property type="chains" value="A=2-154"/>
</dbReference>
<dbReference type="PDB" id="1WVP">
    <property type="method" value="X-ray"/>
    <property type="resolution" value="1.53 A"/>
    <property type="chains" value="A=2-154"/>
</dbReference>
<dbReference type="PDB" id="1YOG">
    <property type="method" value="X-ray"/>
    <property type="resolution" value="1.65 A"/>
    <property type="chains" value="A=2-154"/>
</dbReference>
<dbReference type="PDB" id="1YOH">
    <property type="method" value="X-ray"/>
    <property type="resolution" value="1.65 A"/>
    <property type="chains" value="A=2-154"/>
</dbReference>
<dbReference type="PDB" id="1YOI">
    <property type="method" value="X-ray"/>
    <property type="resolution" value="1.65 A"/>
    <property type="chains" value="A=2-154"/>
</dbReference>
<dbReference type="PDB" id="2BLH">
    <property type="method" value="X-ray"/>
    <property type="resolution" value="1.77 A"/>
    <property type="chains" value="A=2-154"/>
</dbReference>
<dbReference type="PDB" id="2BLI">
    <property type="method" value="X-ray"/>
    <property type="resolution" value="1.70 A"/>
    <property type="chains" value="A=2-154"/>
</dbReference>
<dbReference type="PDB" id="2BLJ">
    <property type="method" value="X-ray"/>
    <property type="resolution" value="1.80 A"/>
    <property type="chains" value="M=2-154"/>
</dbReference>
<dbReference type="PDB" id="2BW9">
    <property type="method" value="X-ray"/>
    <property type="resolution" value="1.68 A"/>
    <property type="chains" value="M=2-154"/>
</dbReference>
<dbReference type="PDB" id="2BWH">
    <property type="method" value="X-ray"/>
    <property type="resolution" value="1.90 A"/>
    <property type="chains" value="A=2-154"/>
</dbReference>
<dbReference type="PDB" id="2CMM">
    <property type="method" value="X-ray"/>
    <property type="resolution" value="1.80 A"/>
    <property type="chains" value="A=2-154"/>
</dbReference>
<dbReference type="PDB" id="2D6C">
    <property type="method" value="X-ray"/>
    <property type="resolution" value="2.26 A"/>
    <property type="chains" value="A/B=2-154"/>
</dbReference>
<dbReference type="PDB" id="2E2Y">
    <property type="method" value="X-ray"/>
    <property type="resolution" value="1.60 A"/>
    <property type="chains" value="A=1-154"/>
</dbReference>
<dbReference type="PDB" id="2EB8">
    <property type="method" value="X-ray"/>
    <property type="resolution" value="1.65 A"/>
    <property type="chains" value="A=1-154"/>
</dbReference>
<dbReference type="PDB" id="2EB9">
    <property type="method" value="X-ray"/>
    <property type="resolution" value="1.80 A"/>
    <property type="chains" value="A=1-154"/>
</dbReference>
<dbReference type="PDB" id="2EF2">
    <property type="method" value="X-ray"/>
    <property type="resolution" value="1.80 A"/>
    <property type="chains" value="A=1-154"/>
</dbReference>
<dbReference type="PDB" id="2EKT">
    <property type="method" value="X-ray"/>
    <property type="resolution" value="1.10 A"/>
    <property type="chains" value="A=2-154"/>
</dbReference>
<dbReference type="PDB" id="2EKU">
    <property type="method" value="X-ray"/>
    <property type="resolution" value="1.40 A"/>
    <property type="chains" value="A=2-154"/>
</dbReference>
<dbReference type="PDB" id="2EVK">
    <property type="method" value="X-ray"/>
    <property type="resolution" value="1.40 A"/>
    <property type="chains" value="A=2-154"/>
</dbReference>
<dbReference type="PDB" id="2EVP">
    <property type="method" value="X-ray"/>
    <property type="resolution" value="1.70 A"/>
    <property type="chains" value="A=2-154"/>
</dbReference>
<dbReference type="PDB" id="2G0R">
    <property type="method" value="X-ray"/>
    <property type="resolution" value="1.95 A"/>
    <property type="chains" value="A=1-154"/>
</dbReference>
<dbReference type="PDB" id="2G0S">
    <property type="method" value="X-ray"/>
    <property type="resolution" value="1.90 A"/>
    <property type="chains" value="A=1-154"/>
</dbReference>
<dbReference type="PDB" id="2G0V">
    <property type="method" value="X-ray"/>
    <property type="resolution" value="1.95 A"/>
    <property type="chains" value="A=1-154"/>
</dbReference>
<dbReference type="PDB" id="2G0X">
    <property type="method" value="X-ray"/>
    <property type="resolution" value="1.95 A"/>
    <property type="chains" value="A=1-154"/>
</dbReference>
<dbReference type="PDB" id="2G0Z">
    <property type="method" value="X-ray"/>
    <property type="resolution" value="1.95 A"/>
    <property type="chains" value="A=1-154"/>
</dbReference>
<dbReference type="PDB" id="2G10">
    <property type="method" value="X-ray"/>
    <property type="resolution" value="1.90 A"/>
    <property type="chains" value="A=1-154"/>
</dbReference>
<dbReference type="PDB" id="2G11">
    <property type="method" value="X-ray"/>
    <property type="resolution" value="1.90 A"/>
    <property type="chains" value="A=1-154"/>
</dbReference>
<dbReference type="PDB" id="2G12">
    <property type="method" value="X-ray"/>
    <property type="resolution" value="1.90 A"/>
    <property type="chains" value="A=1-154"/>
</dbReference>
<dbReference type="PDB" id="2G14">
    <property type="method" value="X-ray"/>
    <property type="resolution" value="1.90 A"/>
    <property type="chains" value="A=1-154"/>
</dbReference>
<dbReference type="PDB" id="2JHO">
    <property type="method" value="X-ray"/>
    <property type="resolution" value="1.40 A"/>
    <property type="chains" value="A=2-154"/>
</dbReference>
<dbReference type="PDB" id="2MB5">
    <property type="method" value="Neutron"/>
    <property type="resolution" value="1.80 A"/>
    <property type="chains" value="A=2-154"/>
</dbReference>
<dbReference type="PDB" id="2MBW">
    <property type="method" value="X-ray"/>
    <property type="resolution" value="1.50 A"/>
    <property type="chains" value="A=1-154"/>
</dbReference>
<dbReference type="PDB" id="2MGA">
    <property type="method" value="X-ray"/>
    <property type="resolution" value="2.20 A"/>
    <property type="chains" value="A=1-154"/>
</dbReference>
<dbReference type="PDB" id="2MGB">
    <property type="method" value="X-ray"/>
    <property type="resolution" value="2.00 A"/>
    <property type="chains" value="A=1-154"/>
</dbReference>
<dbReference type="PDB" id="2MGC">
    <property type="method" value="X-ray"/>
    <property type="resolution" value="1.90 A"/>
    <property type="chains" value="A=1-154"/>
</dbReference>
<dbReference type="PDB" id="2MGD">
    <property type="method" value="X-ray"/>
    <property type="resolution" value="1.80 A"/>
    <property type="chains" value="A=1-154"/>
</dbReference>
<dbReference type="PDB" id="2MGE">
    <property type="method" value="X-ray"/>
    <property type="resolution" value="1.70 A"/>
    <property type="chains" value="A=1-154"/>
</dbReference>
<dbReference type="PDB" id="2MGF">
    <property type="method" value="X-ray"/>
    <property type="resolution" value="1.80 A"/>
    <property type="chains" value="A=1-154"/>
</dbReference>
<dbReference type="PDB" id="2MGG">
    <property type="method" value="X-ray"/>
    <property type="resolution" value="1.80 A"/>
    <property type="chains" value="A=1-154"/>
</dbReference>
<dbReference type="PDB" id="2MGH">
    <property type="method" value="X-ray"/>
    <property type="resolution" value="2.00 A"/>
    <property type="chains" value="A=1-154"/>
</dbReference>
<dbReference type="PDB" id="2MGI">
    <property type="method" value="X-ray"/>
    <property type="resolution" value="2.00 A"/>
    <property type="chains" value="A=1-154"/>
</dbReference>
<dbReference type="PDB" id="2MGJ">
    <property type="method" value="X-ray"/>
    <property type="resolution" value="2.00 A"/>
    <property type="chains" value="A=1-154"/>
</dbReference>
<dbReference type="PDB" id="2MGK">
    <property type="method" value="X-ray"/>
    <property type="resolution" value="2.00 A"/>
    <property type="chains" value="A=1-154"/>
</dbReference>
<dbReference type="PDB" id="2MGL">
    <property type="method" value="X-ray"/>
    <property type="resolution" value="2.00 A"/>
    <property type="chains" value="A=1-154"/>
</dbReference>
<dbReference type="PDB" id="2MGM">
    <property type="method" value="X-ray"/>
    <property type="resolution" value="1.90 A"/>
    <property type="chains" value="A=1-154"/>
</dbReference>
<dbReference type="PDB" id="2MYA">
    <property type="method" value="X-ray"/>
    <property type="resolution" value="1.80 A"/>
    <property type="chains" value="A=2-154"/>
</dbReference>
<dbReference type="PDB" id="2MYB">
    <property type="method" value="X-ray"/>
    <property type="resolution" value="1.90 A"/>
    <property type="chains" value="A=2-154"/>
</dbReference>
<dbReference type="PDB" id="2MYC">
    <property type="method" value="X-ray"/>
    <property type="resolution" value="1.80 A"/>
    <property type="chains" value="A=2-154"/>
</dbReference>
<dbReference type="PDB" id="2MYD">
    <property type="method" value="X-ray"/>
    <property type="resolution" value="1.80 A"/>
    <property type="chains" value="A=2-154"/>
</dbReference>
<dbReference type="PDB" id="2MYE">
    <property type="method" value="X-ray"/>
    <property type="resolution" value="1.68 A"/>
    <property type="chains" value="A=2-154"/>
</dbReference>
<dbReference type="PDB" id="2OH8">
    <property type="method" value="X-ray"/>
    <property type="resolution" value="1.80 A"/>
    <property type="chains" value="A=1-154"/>
</dbReference>
<dbReference type="PDB" id="2OH9">
    <property type="method" value="X-ray"/>
    <property type="resolution" value="1.80 A"/>
    <property type="chains" value="A=1-154"/>
</dbReference>
<dbReference type="PDB" id="2OHA">
    <property type="method" value="X-ray"/>
    <property type="resolution" value="1.80 A"/>
    <property type="chains" value="A=1-154"/>
</dbReference>
<dbReference type="PDB" id="2OHB">
    <property type="method" value="X-ray"/>
    <property type="resolution" value="1.80 A"/>
    <property type="chains" value="A=1-154"/>
</dbReference>
<dbReference type="PDB" id="2SPL">
    <property type="method" value="X-ray"/>
    <property type="resolution" value="1.70 A"/>
    <property type="chains" value="A=1-154"/>
</dbReference>
<dbReference type="PDB" id="2SPM">
    <property type="method" value="X-ray"/>
    <property type="resolution" value="1.70 A"/>
    <property type="chains" value="A=1-154"/>
</dbReference>
<dbReference type="PDB" id="2SPN">
    <property type="method" value="X-ray"/>
    <property type="resolution" value="1.70 A"/>
    <property type="chains" value="A=1-154"/>
</dbReference>
<dbReference type="PDB" id="2SPO">
    <property type="method" value="X-ray"/>
    <property type="resolution" value="1.70 A"/>
    <property type="chains" value="A=1-154"/>
</dbReference>
<dbReference type="PDB" id="2W6W">
    <property type="method" value="X-ray"/>
    <property type="resolution" value="1.99 A"/>
    <property type="chains" value="A=1-154"/>
</dbReference>
<dbReference type="PDB" id="2W6X">
    <property type="method" value="X-ray"/>
    <property type="resolution" value="1.73 A"/>
    <property type="chains" value="A=1-154"/>
</dbReference>
<dbReference type="PDB" id="2W6Y">
    <property type="method" value="X-ray"/>
    <property type="resolution" value="1.60 A"/>
    <property type="chains" value="A=1-154"/>
</dbReference>
<dbReference type="PDB" id="2Z6S">
    <property type="method" value="X-ray"/>
    <property type="resolution" value="1.25 A"/>
    <property type="chains" value="A=2-154"/>
</dbReference>
<dbReference type="PDB" id="2Z6T">
    <property type="method" value="X-ray"/>
    <property type="resolution" value="1.20 A"/>
    <property type="chains" value="A=2-154"/>
</dbReference>
<dbReference type="PDB" id="2ZSN">
    <property type="method" value="X-ray"/>
    <property type="resolution" value="1.21 A"/>
    <property type="chains" value="A=2-154"/>
</dbReference>
<dbReference type="PDB" id="2ZSO">
    <property type="method" value="X-ray"/>
    <property type="resolution" value="1.21 A"/>
    <property type="chains" value="A=2-154"/>
</dbReference>
<dbReference type="PDB" id="2ZSP">
    <property type="method" value="X-ray"/>
    <property type="resolution" value="1.21 A"/>
    <property type="chains" value="A=2-154"/>
</dbReference>
<dbReference type="PDB" id="2ZSQ">
    <property type="method" value="X-ray"/>
    <property type="resolution" value="1.21 A"/>
    <property type="chains" value="A=2-154"/>
</dbReference>
<dbReference type="PDB" id="2ZSR">
    <property type="method" value="X-ray"/>
    <property type="resolution" value="1.21 A"/>
    <property type="chains" value="A=2-154"/>
</dbReference>
<dbReference type="PDB" id="2ZSS">
    <property type="method" value="X-ray"/>
    <property type="resolution" value="1.21 A"/>
    <property type="chains" value="A=2-154"/>
</dbReference>
<dbReference type="PDB" id="2ZST">
    <property type="method" value="X-ray"/>
    <property type="resolution" value="1.21 A"/>
    <property type="chains" value="A=2-154"/>
</dbReference>
<dbReference type="PDB" id="2ZSX">
    <property type="method" value="X-ray"/>
    <property type="resolution" value="1.21 A"/>
    <property type="chains" value="A=2-154"/>
</dbReference>
<dbReference type="PDB" id="2ZSY">
    <property type="method" value="X-ray"/>
    <property type="resolution" value="1.21 A"/>
    <property type="chains" value="A=2-154"/>
</dbReference>
<dbReference type="PDB" id="2ZSZ">
    <property type="method" value="X-ray"/>
    <property type="resolution" value="1.21 A"/>
    <property type="chains" value="A=2-154"/>
</dbReference>
<dbReference type="PDB" id="2ZT0">
    <property type="method" value="X-ray"/>
    <property type="resolution" value="1.21 A"/>
    <property type="chains" value="A=2-154"/>
</dbReference>
<dbReference type="PDB" id="2ZT1">
    <property type="method" value="X-ray"/>
    <property type="resolution" value="1.21 A"/>
    <property type="chains" value="A=2-154"/>
</dbReference>
<dbReference type="PDB" id="2ZT2">
    <property type="method" value="X-ray"/>
    <property type="resolution" value="1.21 A"/>
    <property type="chains" value="A=2-154"/>
</dbReference>
<dbReference type="PDB" id="2ZT3">
    <property type="method" value="X-ray"/>
    <property type="resolution" value="1.21 A"/>
    <property type="chains" value="A=2-154"/>
</dbReference>
<dbReference type="PDB" id="2ZT4">
    <property type="method" value="X-ray"/>
    <property type="resolution" value="1.21 A"/>
    <property type="chains" value="A=2-154"/>
</dbReference>
<dbReference type="PDB" id="3A2G">
    <property type="method" value="X-ray"/>
    <property type="resolution" value="1.75 A"/>
    <property type="chains" value="A=1-154"/>
</dbReference>
<dbReference type="PDB" id="3ASE">
    <property type="method" value="X-ray"/>
    <property type="resolution" value="1.75 A"/>
    <property type="chains" value="A=1-154"/>
</dbReference>
<dbReference type="PDB" id="3E4N">
    <property type="method" value="X-ray"/>
    <property type="resolution" value="1.21 A"/>
    <property type="chains" value="A=2-154"/>
</dbReference>
<dbReference type="PDB" id="3E55">
    <property type="method" value="X-ray"/>
    <property type="resolution" value="1.21 A"/>
    <property type="chains" value="A=2-154"/>
</dbReference>
<dbReference type="PDB" id="3E5I">
    <property type="method" value="X-ray"/>
    <property type="resolution" value="1.22 A"/>
    <property type="chains" value="A=2-154"/>
</dbReference>
<dbReference type="PDB" id="3E5O">
    <property type="method" value="X-ray"/>
    <property type="resolution" value="1.21 A"/>
    <property type="chains" value="A=2-154"/>
</dbReference>
<dbReference type="PDB" id="3ECL">
    <property type="method" value="X-ray"/>
    <property type="resolution" value="1.21 A"/>
    <property type="chains" value="A=2-154"/>
</dbReference>
<dbReference type="PDB" id="3ECX">
    <property type="method" value="X-ray"/>
    <property type="resolution" value="1.21 A"/>
    <property type="chains" value="A=2-154"/>
</dbReference>
<dbReference type="PDB" id="3ECZ">
    <property type="method" value="X-ray"/>
    <property type="resolution" value="1.21 A"/>
    <property type="chains" value="A=2-154"/>
</dbReference>
<dbReference type="PDB" id="3ED9">
    <property type="method" value="X-ray"/>
    <property type="resolution" value="1.21 A"/>
    <property type="chains" value="A=2-154"/>
</dbReference>
<dbReference type="PDB" id="3EDA">
    <property type="method" value="X-ray"/>
    <property type="resolution" value="1.21 A"/>
    <property type="chains" value="A=2-154"/>
</dbReference>
<dbReference type="PDB" id="3EDB">
    <property type="method" value="X-ray"/>
    <property type="resolution" value="1.21 A"/>
    <property type="chains" value="A=2-154"/>
</dbReference>
<dbReference type="PDB" id="3H57">
    <property type="method" value="X-ray"/>
    <property type="resolution" value="1.70 A"/>
    <property type="chains" value="A=1-154"/>
</dbReference>
<dbReference type="PDB" id="3H58">
    <property type="method" value="X-ray"/>
    <property type="resolution" value="1.80 A"/>
    <property type="chains" value="A=1-154"/>
</dbReference>
<dbReference type="PDB" id="3K9Z">
    <property type="method" value="X-ray"/>
    <property type="resolution" value="1.72 A"/>
    <property type="chains" value="A=2-154"/>
</dbReference>
<dbReference type="PDB" id="3M38">
    <property type="method" value="X-ray"/>
    <property type="resolution" value="1.42 A"/>
    <property type="chains" value="A=2-154"/>
</dbReference>
<dbReference type="PDB" id="3M39">
    <property type="method" value="X-ray"/>
    <property type="resolution" value="1.65 A"/>
    <property type="chains" value="A=2-154"/>
</dbReference>
<dbReference type="PDB" id="3M3A">
    <property type="method" value="X-ray"/>
    <property type="resolution" value="1.37 A"/>
    <property type="chains" value="A=2-154"/>
</dbReference>
<dbReference type="PDB" id="3M3B">
    <property type="method" value="X-ray"/>
    <property type="resolution" value="1.60 A"/>
    <property type="chains" value="A=2-154"/>
</dbReference>
<dbReference type="PDB" id="3MN0">
    <property type="method" value="X-ray"/>
    <property type="resolution" value="1.65 A"/>
    <property type="chains" value="A=2-154"/>
</dbReference>
<dbReference type="PDB" id="3NML">
    <property type="method" value="X-ray"/>
    <property type="resolution" value="1.68 A"/>
    <property type="chains" value="A=1-154"/>
</dbReference>
<dbReference type="PDB" id="3O89">
    <property type="method" value="X-ray"/>
    <property type="resolution" value="1.10 A"/>
    <property type="chains" value="A=2-154"/>
</dbReference>
<dbReference type="PDB" id="3OGB">
    <property type="method" value="X-ray"/>
    <property type="resolution" value="1.60 A"/>
    <property type="chains" value="A=1-154"/>
</dbReference>
<dbReference type="PDB" id="3SDN">
    <property type="method" value="X-ray"/>
    <property type="resolution" value="1.50 A"/>
    <property type="chains" value="A=1-154"/>
</dbReference>
<dbReference type="PDB" id="3U3E">
    <property type="method" value="X-ray"/>
    <property type="resolution" value="1.21 A"/>
    <property type="chains" value="A=1-154"/>
</dbReference>
<dbReference type="PDB" id="4FWX">
    <property type="method" value="X-ray"/>
    <property type="resolution" value="1.90 A"/>
    <property type="chains" value="A=2-154"/>
</dbReference>
<dbReference type="PDB" id="4FWY">
    <property type="method" value="X-ray"/>
    <property type="resolution" value="1.80 A"/>
    <property type="chains" value="A=2-154"/>
</dbReference>
<dbReference type="PDB" id="4FWZ">
    <property type="method" value="X-ray"/>
    <property type="resolution" value="1.90 A"/>
    <property type="chains" value="A=2-154"/>
</dbReference>
<dbReference type="PDB" id="4H07">
    <property type="method" value="X-ray"/>
    <property type="resolution" value="1.14 A"/>
    <property type="chains" value="A=1-154"/>
</dbReference>
<dbReference type="PDB" id="4H0B">
    <property type="method" value="X-ray"/>
    <property type="resolution" value="1.26 A"/>
    <property type="chains" value="A=1-154"/>
</dbReference>
<dbReference type="PDB" id="4IT8">
    <property type="method" value="X-ray"/>
    <property type="resolution" value="1.50 A"/>
    <property type="chains" value="A=1-154"/>
</dbReference>
<dbReference type="PDB" id="4LPI">
    <property type="method" value="X-ray"/>
    <property type="resolution" value="1.36 A"/>
    <property type="chains" value="A=1-154"/>
</dbReference>
<dbReference type="PDB" id="4MBN">
    <property type="method" value="X-ray"/>
    <property type="resolution" value="2.00 A"/>
    <property type="chains" value="A=2-154"/>
</dbReference>
<dbReference type="PDB" id="4MXK">
    <property type="method" value="X-ray"/>
    <property type="resolution" value="1.52 A"/>
    <property type="chains" value="A=2-154"/>
</dbReference>
<dbReference type="PDB" id="4MXL">
    <property type="method" value="X-ray"/>
    <property type="resolution" value="1.50 A"/>
    <property type="chains" value="A=2-154"/>
</dbReference>
<dbReference type="PDB" id="4NXA">
    <property type="method" value="X-ray"/>
    <property type="resolution" value="1.60 A"/>
    <property type="chains" value="A=1-154"/>
</dbReference>
<dbReference type="PDB" id="4NXC">
    <property type="method" value="X-ray"/>
    <property type="resolution" value="1.55 A"/>
    <property type="chains" value="A=1-154"/>
</dbReference>
<dbReference type="PDB" id="4OF9">
    <property type="method" value="X-ray"/>
    <property type="resolution" value="1.24 A"/>
    <property type="chains" value="A=2-154"/>
</dbReference>
<dbReference type="PDB" id="4OOD">
    <property type="method" value="X-ray"/>
    <property type="resolution" value="1.24 A"/>
    <property type="chains" value="A=1-154"/>
</dbReference>
<dbReference type="PDB" id="4PNJ">
    <property type="method" value="X-ray"/>
    <property type="resolution" value="1.36 A"/>
    <property type="chains" value="A=1-154"/>
</dbReference>
<dbReference type="PDB" id="4PQ6">
    <property type="method" value="X-ray"/>
    <property type="resolution" value="1.45 A"/>
    <property type="chains" value="A=1-154"/>
</dbReference>
<dbReference type="PDB" id="4PQB">
    <property type="method" value="X-ray"/>
    <property type="resolution" value="1.94 A"/>
    <property type="chains" value="A=1-154"/>
</dbReference>
<dbReference type="PDB" id="4PQC">
    <property type="method" value="X-ray"/>
    <property type="resolution" value="1.50 A"/>
    <property type="chains" value="A=1-154"/>
</dbReference>
<dbReference type="PDB" id="4QAU">
    <property type="method" value="X-ray"/>
    <property type="resolution" value="1.60 A"/>
    <property type="chains" value="A=1-154"/>
</dbReference>
<dbReference type="PDB" id="4TYX">
    <property type="method" value="X-ray"/>
    <property type="resolution" value="1.64 A"/>
    <property type="chains" value="A=2-154"/>
</dbReference>
<dbReference type="PDB" id="5B84">
    <property type="method" value="X-ray"/>
    <property type="resolution" value="1.61 A"/>
    <property type="chains" value="A=2-154"/>
</dbReference>
<dbReference type="PDB" id="5B85">
    <property type="method" value="X-ray"/>
    <property type="resolution" value="1.85 A"/>
    <property type="chains" value="A=2-154"/>
</dbReference>
<dbReference type="PDB" id="5C6Y">
    <property type="method" value="X-ray"/>
    <property type="resolution" value="1.79 A"/>
    <property type="chains" value="A=1-154"/>
</dbReference>
<dbReference type="PDB" id="5HAV">
    <property type="method" value="X-ray"/>
    <property type="resolution" value="1.27 A"/>
    <property type="chains" value="A=2-154"/>
</dbReference>
<dbReference type="PDB" id="5HLQ">
    <property type="method" value="X-ray"/>
    <property type="resolution" value="1.50 A"/>
    <property type="chains" value="A=2-154"/>
</dbReference>
<dbReference type="PDB" id="5HLU">
    <property type="method" value="X-ray"/>
    <property type="resolution" value="1.50 A"/>
    <property type="chains" value="A=2-154"/>
</dbReference>
<dbReference type="PDB" id="5HLX">
    <property type="method" value="X-ray"/>
    <property type="resolution" value="1.50 A"/>
    <property type="chains" value="A=2-154"/>
</dbReference>
<dbReference type="PDB" id="5IKS">
    <property type="method" value="X-ray"/>
    <property type="resolution" value="1.87 A"/>
    <property type="chains" value="A=2-152"/>
</dbReference>
<dbReference type="PDB" id="5ILE">
    <property type="method" value="X-ray"/>
    <property type="resolution" value="1.77 A"/>
    <property type="chains" value="A=1-154"/>
</dbReference>
<dbReference type="PDB" id="5ILM">
    <property type="method" value="X-ray"/>
    <property type="resolution" value="1.70 A"/>
    <property type="chains" value="A=1-154"/>
</dbReference>
<dbReference type="PDB" id="5ILP">
    <property type="method" value="X-ray"/>
    <property type="resolution" value="1.88 A"/>
    <property type="chains" value="A=1-154"/>
</dbReference>
<dbReference type="PDB" id="5ILR">
    <property type="method" value="X-ray"/>
    <property type="resolution" value="1.87 A"/>
    <property type="chains" value="A=1-154"/>
</dbReference>
<dbReference type="PDB" id="5JOM">
    <property type="method" value="X-ray"/>
    <property type="resolution" value="1.90 A"/>
    <property type="chains" value="A=1-154"/>
</dbReference>
<dbReference type="PDB" id="5KD1">
    <property type="method" value="X-ray"/>
    <property type="resolution" value="1.70 A"/>
    <property type="chains" value="A=2-154"/>
</dbReference>
<dbReference type="PDB" id="5KKK">
    <property type="method" value="X-ray"/>
    <property type="resolution" value="1.70 A"/>
    <property type="chains" value="A=1-154"/>
</dbReference>
<dbReference type="PDB" id="5M3S">
    <property type="method" value="X-ray"/>
    <property type="resolution" value="1.80 A"/>
    <property type="chains" value="A=1-154"/>
</dbReference>
<dbReference type="PDB" id="5MBN">
    <property type="method" value="X-ray"/>
    <property type="resolution" value="2.00 A"/>
    <property type="chains" value="A=2-154"/>
</dbReference>
<dbReference type="PDB" id="5O41">
    <property type="method" value="X-ray"/>
    <property type="resolution" value="1.80 A"/>
    <property type="chains" value="A=1-154"/>
</dbReference>
<dbReference type="PDB" id="5OJ9">
    <property type="method" value="X-ray"/>
    <property type="resolution" value="1.48 A"/>
    <property type="chains" value="A=1-154"/>
</dbReference>
<dbReference type="PDB" id="5OJA">
    <property type="method" value="X-ray"/>
    <property type="resolution" value="1.35 A"/>
    <property type="chains" value="A=1-154"/>
</dbReference>
<dbReference type="PDB" id="5OJB">
    <property type="method" value="X-ray"/>
    <property type="resolution" value="1.54 A"/>
    <property type="chains" value="A=1-154"/>
</dbReference>
<dbReference type="PDB" id="5OJC">
    <property type="method" value="X-ray"/>
    <property type="resolution" value="1.25 A"/>
    <property type="chains" value="A=1-154"/>
</dbReference>
<dbReference type="PDB" id="5UT7">
    <property type="method" value="X-ray"/>
    <property type="resolution" value="1.85 A"/>
    <property type="chains" value="A=1-154"/>
</dbReference>
<dbReference type="PDB" id="5UT8">
    <property type="method" value="X-ray"/>
    <property type="resolution" value="1.78 A"/>
    <property type="chains" value="A=1-154"/>
</dbReference>
<dbReference type="PDB" id="5UT9">
    <property type="method" value="X-ray"/>
    <property type="resolution" value="1.85 A"/>
    <property type="chains" value="A=1-154"/>
</dbReference>
<dbReference type="PDB" id="5UTA">
    <property type="method" value="X-ray"/>
    <property type="resolution" value="1.81 A"/>
    <property type="chains" value="A=1-154"/>
</dbReference>
<dbReference type="PDB" id="5UTB">
    <property type="method" value="X-ray"/>
    <property type="resolution" value="1.78 A"/>
    <property type="chains" value="A=1-154"/>
</dbReference>
<dbReference type="PDB" id="5UTC">
    <property type="method" value="X-ray"/>
    <property type="resolution" value="1.80 A"/>
    <property type="chains" value="A=1-154"/>
</dbReference>
<dbReference type="PDB" id="5UTD">
    <property type="method" value="X-ray"/>
    <property type="resolution" value="1.78 A"/>
    <property type="chains" value="A=1-154"/>
</dbReference>
<dbReference type="PDB" id="5VNU">
    <property type="method" value="X-ray"/>
    <property type="resolution" value="1.58 A"/>
    <property type="chains" value="A=2-154"/>
</dbReference>
<dbReference type="PDB" id="5VRT">
    <property type="method" value="X-ray"/>
    <property type="resolution" value="2.00 A"/>
    <property type="chains" value="A=2-154"/>
</dbReference>
<dbReference type="PDB" id="5VZN">
    <property type="method" value="X-ray"/>
    <property type="resolution" value="1.70 A"/>
    <property type="chains" value="A=1-154"/>
</dbReference>
<dbReference type="PDB" id="5VZO">
    <property type="method" value="X-ray"/>
    <property type="resolution" value="1.78 A"/>
    <property type="chains" value="A=1-154"/>
</dbReference>
<dbReference type="PDB" id="5VZP">
    <property type="method" value="X-ray"/>
    <property type="resolution" value="1.78 A"/>
    <property type="chains" value="A=1-154"/>
</dbReference>
<dbReference type="PDB" id="5VZQ">
    <property type="method" value="X-ray"/>
    <property type="resolution" value="1.79 A"/>
    <property type="chains" value="A=1-154"/>
</dbReference>
<dbReference type="PDB" id="5WJK">
    <property type="method" value="X-ray"/>
    <property type="resolution" value="2.00 A"/>
    <property type="chains" value="A=1-154"/>
</dbReference>
<dbReference type="PDB" id="5XKV">
    <property type="method" value="X-ray"/>
    <property type="resolution" value="1.40 A"/>
    <property type="chains" value="A=2-154"/>
</dbReference>
<dbReference type="PDB" id="5XKW">
    <property type="method" value="X-ray"/>
    <property type="resolution" value="1.70 A"/>
    <property type="chains" value="A=2-154"/>
</dbReference>
<dbReference type="PDB" id="5XL0">
    <property type="method" value="X-ray"/>
    <property type="resolution" value="1.25 A"/>
    <property type="chains" value="A=2-152"/>
</dbReference>
<dbReference type="PDB" id="5YCE">
    <property type="method" value="X-ray"/>
    <property type="resolution" value="0.77 A"/>
    <property type="chains" value="A=1-154"/>
</dbReference>
<dbReference type="PDB" id="5YCH">
    <property type="method" value="X-ray"/>
    <property type="resolution" value="1.35 A"/>
    <property type="chains" value="A=1-154"/>
</dbReference>
<dbReference type="PDB" id="5YZF">
    <property type="method" value="X-ray"/>
    <property type="resolution" value="1.77 A"/>
    <property type="chains" value="A=1-154"/>
</dbReference>
<dbReference type="PDB" id="5ZEO">
    <property type="method" value="X-ray"/>
    <property type="resolution" value="1.77 A"/>
    <property type="chains" value="A=2-154"/>
</dbReference>
<dbReference type="PDB" id="5ZZF">
    <property type="method" value="X-ray"/>
    <property type="resolution" value="1.60 A"/>
    <property type="chains" value="A=2-154"/>
</dbReference>
<dbReference type="PDB" id="5ZZG">
    <property type="method" value="X-ray"/>
    <property type="resolution" value="1.80 A"/>
    <property type="chains" value="A=2-154"/>
</dbReference>
<dbReference type="PDB" id="6CF0">
    <property type="method" value="X-ray"/>
    <property type="resolution" value="1.64 A"/>
    <property type="chains" value="A=1-154"/>
</dbReference>
<dbReference type="PDB" id="6D45">
    <property type="method" value="X-ray"/>
    <property type="resolution" value="1.78 A"/>
    <property type="chains" value="A=2-154"/>
</dbReference>
<dbReference type="PDB" id="6E02">
    <property type="method" value="X-ray"/>
    <property type="resolution" value="1.76 A"/>
    <property type="chains" value="A=1-154"/>
</dbReference>
<dbReference type="PDB" id="6E03">
    <property type="method" value="X-ray"/>
    <property type="resolution" value="1.76 A"/>
    <property type="chains" value="A=1-154"/>
</dbReference>
<dbReference type="PDB" id="6E04">
    <property type="method" value="X-ray"/>
    <property type="resolution" value="2.00 A"/>
    <property type="chains" value="A=1-154"/>
</dbReference>
<dbReference type="PDB" id="6F17">
    <property type="method" value="X-ray"/>
    <property type="resolution" value="1.45 A"/>
    <property type="chains" value="A=2-154"/>
</dbReference>
<dbReference type="PDB" id="6F18">
    <property type="method" value="X-ray"/>
    <property type="resolution" value="1.80 A"/>
    <property type="chains" value="A=2-154"/>
</dbReference>
<dbReference type="PDB" id="6F19">
    <property type="method" value="X-ray"/>
    <property type="resolution" value="1.90 A"/>
    <property type="chains" value="A=2-154"/>
</dbReference>
<dbReference type="PDB" id="6F1A">
    <property type="method" value="X-ray"/>
    <property type="resolution" value="2.40 A"/>
    <property type="chains" value="A=2-154"/>
</dbReference>
<dbReference type="PDB" id="6G5A">
    <property type="method" value="X-ray"/>
    <property type="resolution" value="1.48 A"/>
    <property type="chains" value="A=1-154"/>
</dbReference>
<dbReference type="PDB" id="6G5B">
    <property type="method" value="X-ray"/>
    <property type="resolution" value="1.60 A"/>
    <property type="chains" value="A=1-154"/>
</dbReference>
<dbReference type="PDB" id="6G5T">
    <property type="method" value="X-ray"/>
    <property type="resolution" value="1.50 A"/>
    <property type="chains" value="A=1-154"/>
</dbReference>
<dbReference type="PDB" id="6JP1">
    <property type="method" value="X-ray"/>
    <property type="resolution" value="1.99 A"/>
    <property type="chains" value="A/B=2-152"/>
</dbReference>
<dbReference type="PDB" id="6KRC">
    <property type="method" value="X-ray"/>
    <property type="resolution" value="1.39 A"/>
    <property type="chains" value="A=2-154"/>
</dbReference>
<dbReference type="PDB" id="6KRF">
    <property type="method" value="X-ray"/>
    <property type="resolution" value="1.86 A"/>
    <property type="chains" value="A=2-154"/>
</dbReference>
<dbReference type="PDB" id="6M8F">
    <property type="method" value="X-ray"/>
    <property type="resolution" value="1.10 A"/>
    <property type="chains" value="A=1-154"/>
</dbReference>
<dbReference type="PDB" id="6MV0">
    <property type="method" value="X-ray"/>
    <property type="resolution" value="1.97 A"/>
    <property type="chains" value="A=1-154"/>
</dbReference>
<dbReference type="PDB" id="6N02">
    <property type="method" value="X-ray"/>
    <property type="resolution" value="2.00 A"/>
    <property type="chains" value="A=1-154"/>
</dbReference>
<dbReference type="PDB" id="6N03">
    <property type="method" value="X-ray"/>
    <property type="resolution" value="2.10 A"/>
    <property type="chains" value="A=1-154"/>
</dbReference>
<dbReference type="PDB" id="6Z4R">
    <property type="method" value="X-ray"/>
    <property type="resolution" value="1.96 A"/>
    <property type="chains" value="A=2-154"/>
</dbReference>
<dbReference type="PDB" id="6Z4T">
    <property type="method" value="X-ray"/>
    <property type="resolution" value="1.23 A"/>
    <property type="chains" value="A=2-154"/>
</dbReference>
<dbReference type="PDB" id="7A44">
    <property type="method" value="X-ray"/>
    <property type="resolution" value="1.75 A"/>
    <property type="chains" value="A=1-154"/>
</dbReference>
<dbReference type="PDB" id="7A45">
    <property type="method" value="X-ray"/>
    <property type="resolution" value="1.75 A"/>
    <property type="chains" value="A=1-154"/>
</dbReference>
<dbReference type="PDB" id="7CEN">
    <property type="method" value="X-ray"/>
    <property type="resolution" value="2.35 A"/>
    <property type="chains" value="A=1-154"/>
</dbReference>
<dbReference type="PDB" id="7CEZ">
    <property type="method" value="X-ray"/>
    <property type="resolution" value="1.57 A"/>
    <property type="chains" value="A=1-154"/>
</dbReference>
<dbReference type="PDB" id="7EHX">
    <property type="method" value="X-ray"/>
    <property type="resolution" value="1.80 A"/>
    <property type="chains" value="A=1-154"/>
</dbReference>
<dbReference type="PDB" id="7KYR">
    <property type="method" value="X-ray"/>
    <property type="resolution" value="1.71 A"/>
    <property type="chains" value="A=1-154"/>
</dbReference>
<dbReference type="PDB" id="7L3U">
    <property type="method" value="X-ray"/>
    <property type="resolution" value="1.47 A"/>
    <property type="chains" value="A=1-154"/>
</dbReference>
<dbReference type="PDB" id="7L3Y">
    <property type="method" value="X-ray"/>
    <property type="resolution" value="1.18 A"/>
    <property type="chains" value="A=1-154"/>
</dbReference>
<dbReference type="PDB" id="7SLH">
    <property type="method" value="X-ray"/>
    <property type="resolution" value="1.15 A"/>
    <property type="chains" value="A=1-154"/>
</dbReference>
<dbReference type="PDB" id="7SLI">
    <property type="method" value="X-ray"/>
    <property type="resolution" value="2.00 A"/>
    <property type="chains" value="A=1-154"/>
</dbReference>
<dbReference type="PDB" id="7SPE">
    <property type="method" value="X-ray"/>
    <property type="resolution" value="1.70 A"/>
    <property type="chains" value="A=1-154"/>
</dbReference>
<dbReference type="PDB" id="7SPF">
    <property type="method" value="X-ray"/>
    <property type="resolution" value="1.17 A"/>
    <property type="chains" value="A=1-154"/>
</dbReference>
<dbReference type="PDB" id="7SPG">
    <property type="method" value="X-ray"/>
    <property type="resolution" value="1.30 A"/>
    <property type="chains" value="A=1-154"/>
</dbReference>
<dbReference type="PDB" id="7SPH">
    <property type="method" value="X-ray"/>
    <property type="resolution" value="1.30 A"/>
    <property type="chains" value="A=1-154"/>
</dbReference>
<dbReference type="PDB" id="7VDN">
    <property type="method" value="X-ray"/>
    <property type="resolution" value="0.93 A"/>
    <property type="chains" value="A=2-152"/>
</dbReference>
<dbReference type="PDB" id="7VUC">
    <property type="method" value="X-ray"/>
    <property type="resolution" value="1.40 A"/>
    <property type="chains" value="A=1-154"/>
</dbReference>
<dbReference type="PDB" id="7VW4">
    <property type="method" value="X-ray"/>
    <property type="resolution" value="1.80 A"/>
    <property type="chains" value="A=1-154"/>
</dbReference>
<dbReference type="PDB" id="7XC9">
    <property type="method" value="X-ray"/>
    <property type="resolution" value="1.90 A"/>
    <property type="chains" value="A=1-154"/>
</dbReference>
<dbReference type="PDB" id="7XCF">
    <property type="method" value="X-ray"/>
    <property type="resolution" value="1.70 A"/>
    <property type="chains" value="A=1-154"/>
</dbReference>
<dbReference type="PDB" id="7XCQ">
    <property type="method" value="X-ray"/>
    <property type="resolution" value="1.60 A"/>
    <property type="chains" value="A=1-154"/>
</dbReference>
<dbReference type="PDB" id="7YLK">
    <property type="method" value="X-ray"/>
    <property type="resolution" value="1.63 A"/>
    <property type="chains" value="A=2-154"/>
</dbReference>
<dbReference type="PDB" id="8EKO">
    <property type="method" value="X-ray"/>
    <property type="resolution" value="1.34 A"/>
    <property type="chains" value="A=2-154"/>
</dbReference>
<dbReference type="PDB" id="8ESS">
    <property type="method" value="X-ray"/>
    <property type="resolution" value="1.40 A"/>
    <property type="chains" value="A=1-154"/>
</dbReference>
<dbReference type="PDB" id="8ESU">
    <property type="method" value="X-ray"/>
    <property type="resolution" value="1.04 A"/>
    <property type="chains" value="A=1-154"/>
</dbReference>
<dbReference type="PDB" id="8F9H">
    <property type="method" value="X-ray"/>
    <property type="resolution" value="1.75 A"/>
    <property type="chains" value="A=1-154"/>
</dbReference>
<dbReference type="PDB" id="8F9I">
    <property type="method" value="X-ray"/>
    <property type="resolution" value="1.80 A"/>
    <property type="chains" value="A/B=1-154"/>
</dbReference>
<dbReference type="PDB" id="8F9J">
    <property type="method" value="X-ray"/>
    <property type="resolution" value="1.75 A"/>
    <property type="chains" value="A=1-154"/>
</dbReference>
<dbReference type="PDB" id="8F9N">
    <property type="method" value="X-ray"/>
    <property type="resolution" value="1.80 A"/>
    <property type="chains" value="A=1-154"/>
</dbReference>
<dbReference type="PDB" id="8FB0">
    <property type="method" value="X-ray"/>
    <property type="resolution" value="1.76 A"/>
    <property type="chains" value="A=1-154"/>
</dbReference>
<dbReference type="PDB" id="8FDJ">
    <property type="method" value="X-ray"/>
    <property type="resolution" value="1.75 A"/>
    <property type="chains" value="A=1-154"/>
</dbReference>
<dbReference type="PDB" id="8J4K">
    <property type="method" value="X-ray"/>
    <property type="resolution" value="1.46 A"/>
    <property type="chains" value="A=1-154"/>
</dbReference>
<dbReference type="PDB" id="8J4L">
    <property type="method" value="X-ray"/>
    <property type="resolution" value="1.45 A"/>
    <property type="chains" value="A=1-154"/>
</dbReference>
<dbReference type="PDB" id="8KFH">
    <property type="method" value="X-ray"/>
    <property type="resolution" value="2.27 A"/>
    <property type="chains" value="A/B=2-154"/>
</dbReference>
<dbReference type="PDB" id="8KFI">
    <property type="method" value="X-ray"/>
    <property type="resolution" value="2.37 A"/>
    <property type="chains" value="A/B=2-154"/>
</dbReference>
<dbReference type="PDB" id="8KFJ">
    <property type="method" value="X-ray"/>
    <property type="resolution" value="1.90 A"/>
    <property type="chains" value="A/B=2-154"/>
</dbReference>
<dbReference type="PDB" id="8QBA">
    <property type="method" value="X-ray"/>
    <property type="resolution" value="1.39 A"/>
    <property type="chains" value="A=1-154"/>
</dbReference>
<dbReference type="PDB" id="8QBC">
    <property type="method" value="X-ray"/>
    <property type="resolution" value="1.23 A"/>
    <property type="chains" value="A=1-154"/>
</dbReference>
<dbReference type="PDB" id="8XBJ">
    <property type="method" value="X-ray"/>
    <property type="resolution" value="1.55 A"/>
    <property type="chains" value="A=2-154"/>
</dbReference>
<dbReference type="PDB" id="8XC2">
    <property type="method" value="X-ray"/>
    <property type="resolution" value="1.50 A"/>
    <property type="chains" value="A=2-154"/>
</dbReference>
<dbReference type="PDBsum" id="101M"/>
<dbReference type="PDBsum" id="102M"/>
<dbReference type="PDBsum" id="103M"/>
<dbReference type="PDBsum" id="104M"/>
<dbReference type="PDBsum" id="105M"/>
<dbReference type="PDBsum" id="106M"/>
<dbReference type="PDBsum" id="107M"/>
<dbReference type="PDBsum" id="108M"/>
<dbReference type="PDBsum" id="109M"/>
<dbReference type="PDBsum" id="110M"/>
<dbReference type="PDBsum" id="111M"/>
<dbReference type="PDBsum" id="112M"/>
<dbReference type="PDBsum" id="1A6G"/>
<dbReference type="PDBsum" id="1A6K"/>
<dbReference type="PDBsum" id="1A6M"/>
<dbReference type="PDBsum" id="1A6N"/>
<dbReference type="PDBsum" id="1ABS"/>
<dbReference type="PDBsum" id="1AJG"/>
<dbReference type="PDBsum" id="1AJH"/>
<dbReference type="PDBsum" id="1BVC"/>
<dbReference type="PDBsum" id="1BVD"/>
<dbReference type="PDBsum" id="1BZ6"/>
<dbReference type="PDBsum" id="1BZP"/>
<dbReference type="PDBsum" id="1BZR"/>
<dbReference type="PDBsum" id="1CH1"/>
<dbReference type="PDBsum" id="1CH2"/>
<dbReference type="PDBsum" id="1CH3"/>
<dbReference type="PDBsum" id="1CH5"/>
<dbReference type="PDBsum" id="1CH7"/>
<dbReference type="PDBsum" id="1CH9"/>
<dbReference type="PDBsum" id="1CIK"/>
<dbReference type="PDBsum" id="1CIO"/>
<dbReference type="PDBsum" id="1CO8"/>
<dbReference type="PDBsum" id="1CO9"/>
<dbReference type="PDBsum" id="1CP0"/>
<dbReference type="PDBsum" id="1CP5"/>
<dbReference type="PDBsum" id="1CPW"/>
<dbReference type="PDBsum" id="1CQ2"/>
<dbReference type="PDBsum" id="1DO1"/>
<dbReference type="PDBsum" id="1DO3"/>
<dbReference type="PDBsum" id="1DO4"/>
<dbReference type="PDBsum" id="1DO7"/>
<dbReference type="PDBsum" id="1DTI"/>
<dbReference type="PDBsum" id="1DTM"/>
<dbReference type="PDBsum" id="1DUK"/>
<dbReference type="PDBsum" id="1DUO"/>
<dbReference type="PDBsum" id="1DXC"/>
<dbReference type="PDBsum" id="1DXD"/>
<dbReference type="PDBsum" id="1EBC"/>
<dbReference type="PDBsum" id="1F63"/>
<dbReference type="PDBsum" id="1F65"/>
<dbReference type="PDBsum" id="1F6H"/>
<dbReference type="PDBsum" id="1FCS"/>
<dbReference type="PDBsum" id="1H1X"/>
<dbReference type="PDBsum" id="1HJT"/>
<dbReference type="PDBsum" id="1IOP"/>
<dbReference type="PDBsum" id="1IRC"/>
<dbReference type="PDBsum" id="1J3F"/>
<dbReference type="PDBsum" id="1J52"/>
<dbReference type="PDBsum" id="1JDO"/>
<dbReference type="PDBsum" id="1JP6"/>
<dbReference type="PDBsum" id="1JP8"/>
<dbReference type="PDBsum" id="1JP9"/>
<dbReference type="PDBsum" id="1JPB"/>
<dbReference type="PDBsum" id="1JW8"/>
<dbReference type="PDBsum" id="1L2K"/>
<dbReference type="PDBsum" id="1LTW"/>
<dbReference type="PDBsum" id="1LUE"/>
<dbReference type="PDBsum" id="1MBC"/>
<dbReference type="PDBsum" id="1MBD"/>
<dbReference type="PDBsum" id="1MBI"/>
<dbReference type="PDBsum" id="1MBN"/>
<dbReference type="PDBsum" id="1MBO"/>
<dbReference type="PDBsum" id="1MCY"/>
<dbReference type="PDBsum" id="1MGN"/>
<dbReference type="PDBsum" id="1MLF"/>
<dbReference type="PDBsum" id="1MLG"/>
<dbReference type="PDBsum" id="1MLH"/>
<dbReference type="PDBsum" id="1MLJ"/>
<dbReference type="PDBsum" id="1MLK"/>
<dbReference type="PDBsum" id="1MLL"/>
<dbReference type="PDBsum" id="1MLM"/>
<dbReference type="PDBsum" id="1MLN"/>
<dbReference type="PDBsum" id="1MLO"/>
<dbReference type="PDBsum" id="1MLQ"/>
<dbReference type="PDBsum" id="1MLR"/>
<dbReference type="PDBsum" id="1MLS"/>
<dbReference type="PDBsum" id="1MLU"/>
<dbReference type="PDBsum" id="1MOA"/>
<dbReference type="PDBsum" id="1MOB"/>
<dbReference type="PDBsum" id="1MOC"/>
<dbReference type="PDBsum" id="1MOD"/>
<dbReference type="PDBsum" id="1MTI"/>
<dbReference type="PDBsum" id="1MTJ"/>
<dbReference type="PDBsum" id="1MTK"/>
<dbReference type="PDBsum" id="1MYF"/>
<dbReference type="PDBsum" id="1MYM"/>
<dbReference type="PDBsum" id="1MYZ"/>
<dbReference type="PDBsum" id="1MZ0"/>
<dbReference type="PDBsum" id="1N9F"/>
<dbReference type="PDBsum" id="1N9H"/>
<dbReference type="PDBsum" id="1N9I"/>
<dbReference type="PDBsum" id="1N9X"/>
<dbReference type="PDBsum" id="1NAZ"/>
<dbReference type="PDBsum" id="1O16"/>
<dbReference type="PDBsum" id="1OBM"/>
<dbReference type="PDBsum" id="1OFJ"/>
<dbReference type="PDBsum" id="1OFK"/>
<dbReference type="PDBsum" id="1SPE"/>
<dbReference type="PDBsum" id="1SWM"/>
<dbReference type="PDBsum" id="1TES"/>
<dbReference type="PDBsum" id="1U7R"/>
<dbReference type="PDBsum" id="1U7S"/>
<dbReference type="PDBsum" id="1UFJ"/>
<dbReference type="PDBsum" id="1UFP"/>
<dbReference type="PDBsum" id="1V9Q"/>
<dbReference type="PDBsum" id="1VXA"/>
<dbReference type="PDBsum" id="1VXB"/>
<dbReference type="PDBsum" id="1VXC"/>
<dbReference type="PDBsum" id="1VXD"/>
<dbReference type="PDBsum" id="1VXE"/>
<dbReference type="PDBsum" id="1VXF"/>
<dbReference type="PDBsum" id="1VXG"/>
<dbReference type="PDBsum" id="1VXH"/>
<dbReference type="PDBsum" id="1WVP"/>
<dbReference type="PDBsum" id="1YOG"/>
<dbReference type="PDBsum" id="1YOH"/>
<dbReference type="PDBsum" id="1YOI"/>
<dbReference type="PDBsum" id="2BLH"/>
<dbReference type="PDBsum" id="2BLI"/>
<dbReference type="PDBsum" id="2BLJ"/>
<dbReference type="PDBsum" id="2BW9"/>
<dbReference type="PDBsum" id="2BWH"/>
<dbReference type="PDBsum" id="2CMM"/>
<dbReference type="PDBsum" id="2D6C"/>
<dbReference type="PDBsum" id="2E2Y"/>
<dbReference type="PDBsum" id="2EB8"/>
<dbReference type="PDBsum" id="2EB9"/>
<dbReference type="PDBsum" id="2EF2"/>
<dbReference type="PDBsum" id="2EKT"/>
<dbReference type="PDBsum" id="2EKU"/>
<dbReference type="PDBsum" id="2EVK"/>
<dbReference type="PDBsum" id="2EVP"/>
<dbReference type="PDBsum" id="2G0R"/>
<dbReference type="PDBsum" id="2G0S"/>
<dbReference type="PDBsum" id="2G0V"/>
<dbReference type="PDBsum" id="2G0X"/>
<dbReference type="PDBsum" id="2G0Z"/>
<dbReference type="PDBsum" id="2G10"/>
<dbReference type="PDBsum" id="2G11"/>
<dbReference type="PDBsum" id="2G12"/>
<dbReference type="PDBsum" id="2G14"/>
<dbReference type="PDBsum" id="2JHO"/>
<dbReference type="PDBsum" id="2MB5"/>
<dbReference type="PDBsum" id="2MBW"/>
<dbReference type="PDBsum" id="2MGA"/>
<dbReference type="PDBsum" id="2MGB"/>
<dbReference type="PDBsum" id="2MGC"/>
<dbReference type="PDBsum" id="2MGD"/>
<dbReference type="PDBsum" id="2MGE"/>
<dbReference type="PDBsum" id="2MGF"/>
<dbReference type="PDBsum" id="2MGG"/>
<dbReference type="PDBsum" id="2MGH"/>
<dbReference type="PDBsum" id="2MGI"/>
<dbReference type="PDBsum" id="2MGJ"/>
<dbReference type="PDBsum" id="2MGK"/>
<dbReference type="PDBsum" id="2MGL"/>
<dbReference type="PDBsum" id="2MGM"/>
<dbReference type="PDBsum" id="2MYA"/>
<dbReference type="PDBsum" id="2MYB"/>
<dbReference type="PDBsum" id="2MYC"/>
<dbReference type="PDBsum" id="2MYD"/>
<dbReference type="PDBsum" id="2MYE"/>
<dbReference type="PDBsum" id="2OH8"/>
<dbReference type="PDBsum" id="2OH9"/>
<dbReference type="PDBsum" id="2OHA"/>
<dbReference type="PDBsum" id="2OHB"/>
<dbReference type="PDBsum" id="2SPL"/>
<dbReference type="PDBsum" id="2SPM"/>
<dbReference type="PDBsum" id="2SPN"/>
<dbReference type="PDBsum" id="2SPO"/>
<dbReference type="PDBsum" id="2W6W"/>
<dbReference type="PDBsum" id="2W6X"/>
<dbReference type="PDBsum" id="2W6Y"/>
<dbReference type="PDBsum" id="2Z6S"/>
<dbReference type="PDBsum" id="2Z6T"/>
<dbReference type="PDBsum" id="2ZSN"/>
<dbReference type="PDBsum" id="2ZSO"/>
<dbReference type="PDBsum" id="2ZSP"/>
<dbReference type="PDBsum" id="2ZSQ"/>
<dbReference type="PDBsum" id="2ZSR"/>
<dbReference type="PDBsum" id="2ZSS"/>
<dbReference type="PDBsum" id="2ZST"/>
<dbReference type="PDBsum" id="2ZSX"/>
<dbReference type="PDBsum" id="2ZSY"/>
<dbReference type="PDBsum" id="2ZSZ"/>
<dbReference type="PDBsum" id="2ZT0"/>
<dbReference type="PDBsum" id="2ZT1"/>
<dbReference type="PDBsum" id="2ZT2"/>
<dbReference type="PDBsum" id="2ZT3"/>
<dbReference type="PDBsum" id="2ZT4"/>
<dbReference type="PDBsum" id="3A2G"/>
<dbReference type="PDBsum" id="3ASE"/>
<dbReference type="PDBsum" id="3E4N"/>
<dbReference type="PDBsum" id="3E55"/>
<dbReference type="PDBsum" id="3E5I"/>
<dbReference type="PDBsum" id="3E5O"/>
<dbReference type="PDBsum" id="3ECL"/>
<dbReference type="PDBsum" id="3ECX"/>
<dbReference type="PDBsum" id="3ECZ"/>
<dbReference type="PDBsum" id="3ED9"/>
<dbReference type="PDBsum" id="3EDA"/>
<dbReference type="PDBsum" id="3EDB"/>
<dbReference type="PDBsum" id="3H57"/>
<dbReference type="PDBsum" id="3H58"/>
<dbReference type="PDBsum" id="3K9Z"/>
<dbReference type="PDBsum" id="3M38"/>
<dbReference type="PDBsum" id="3M39"/>
<dbReference type="PDBsum" id="3M3A"/>
<dbReference type="PDBsum" id="3M3B"/>
<dbReference type="PDBsum" id="3MN0"/>
<dbReference type="PDBsum" id="3NML"/>
<dbReference type="PDBsum" id="3O89"/>
<dbReference type="PDBsum" id="3OGB"/>
<dbReference type="PDBsum" id="3SDN"/>
<dbReference type="PDBsum" id="3U3E"/>
<dbReference type="PDBsum" id="4FWX"/>
<dbReference type="PDBsum" id="4FWY"/>
<dbReference type="PDBsum" id="4FWZ"/>
<dbReference type="PDBsum" id="4H07"/>
<dbReference type="PDBsum" id="4H0B"/>
<dbReference type="PDBsum" id="4IT8"/>
<dbReference type="PDBsum" id="4LPI"/>
<dbReference type="PDBsum" id="4MBN"/>
<dbReference type="PDBsum" id="4MXK"/>
<dbReference type="PDBsum" id="4MXL"/>
<dbReference type="PDBsum" id="4NXA"/>
<dbReference type="PDBsum" id="4NXC"/>
<dbReference type="PDBsum" id="4OF9"/>
<dbReference type="PDBsum" id="4OOD"/>
<dbReference type="PDBsum" id="4PNJ"/>
<dbReference type="PDBsum" id="4PQ6"/>
<dbReference type="PDBsum" id="4PQB"/>
<dbReference type="PDBsum" id="4PQC"/>
<dbReference type="PDBsum" id="4QAU"/>
<dbReference type="PDBsum" id="4TYX"/>
<dbReference type="PDBsum" id="5B84"/>
<dbReference type="PDBsum" id="5B85"/>
<dbReference type="PDBsum" id="5C6Y"/>
<dbReference type="PDBsum" id="5HAV"/>
<dbReference type="PDBsum" id="5HLQ"/>
<dbReference type="PDBsum" id="5HLU"/>
<dbReference type="PDBsum" id="5HLX"/>
<dbReference type="PDBsum" id="5IKS"/>
<dbReference type="PDBsum" id="5ILE"/>
<dbReference type="PDBsum" id="5ILM"/>
<dbReference type="PDBsum" id="5ILP"/>
<dbReference type="PDBsum" id="5ILR"/>
<dbReference type="PDBsum" id="5JOM"/>
<dbReference type="PDBsum" id="5KD1"/>
<dbReference type="PDBsum" id="5KKK"/>
<dbReference type="PDBsum" id="5M3S"/>
<dbReference type="PDBsum" id="5MBN"/>
<dbReference type="PDBsum" id="5O41"/>
<dbReference type="PDBsum" id="5OJ9"/>
<dbReference type="PDBsum" id="5OJA"/>
<dbReference type="PDBsum" id="5OJB"/>
<dbReference type="PDBsum" id="5OJC"/>
<dbReference type="PDBsum" id="5UT7"/>
<dbReference type="PDBsum" id="5UT8"/>
<dbReference type="PDBsum" id="5UT9"/>
<dbReference type="PDBsum" id="5UTA"/>
<dbReference type="PDBsum" id="5UTB"/>
<dbReference type="PDBsum" id="5UTC"/>
<dbReference type="PDBsum" id="5UTD"/>
<dbReference type="PDBsum" id="5VNU"/>
<dbReference type="PDBsum" id="5VRT"/>
<dbReference type="PDBsum" id="5VZN"/>
<dbReference type="PDBsum" id="5VZO"/>
<dbReference type="PDBsum" id="5VZP"/>
<dbReference type="PDBsum" id="5VZQ"/>
<dbReference type="PDBsum" id="5WJK"/>
<dbReference type="PDBsum" id="5XKV"/>
<dbReference type="PDBsum" id="5XKW"/>
<dbReference type="PDBsum" id="5XL0"/>
<dbReference type="PDBsum" id="5YCE"/>
<dbReference type="PDBsum" id="5YCH"/>
<dbReference type="PDBsum" id="5YZF"/>
<dbReference type="PDBsum" id="5ZEO"/>
<dbReference type="PDBsum" id="5ZZF"/>
<dbReference type="PDBsum" id="5ZZG"/>
<dbReference type="PDBsum" id="6CF0"/>
<dbReference type="PDBsum" id="6D45"/>
<dbReference type="PDBsum" id="6E02"/>
<dbReference type="PDBsum" id="6E03"/>
<dbReference type="PDBsum" id="6E04"/>
<dbReference type="PDBsum" id="6F17"/>
<dbReference type="PDBsum" id="6F18"/>
<dbReference type="PDBsum" id="6F19"/>
<dbReference type="PDBsum" id="6F1A"/>
<dbReference type="PDBsum" id="6G5A"/>
<dbReference type="PDBsum" id="6G5B"/>
<dbReference type="PDBsum" id="6G5T"/>
<dbReference type="PDBsum" id="6JP1"/>
<dbReference type="PDBsum" id="6KRC"/>
<dbReference type="PDBsum" id="6KRF"/>
<dbReference type="PDBsum" id="6M8F"/>
<dbReference type="PDBsum" id="6MV0"/>
<dbReference type="PDBsum" id="6N02"/>
<dbReference type="PDBsum" id="6N03"/>
<dbReference type="PDBsum" id="6Z4R"/>
<dbReference type="PDBsum" id="6Z4T"/>
<dbReference type="PDBsum" id="7A44"/>
<dbReference type="PDBsum" id="7A45"/>
<dbReference type="PDBsum" id="7CEN"/>
<dbReference type="PDBsum" id="7CEZ"/>
<dbReference type="PDBsum" id="7EHX"/>
<dbReference type="PDBsum" id="7KYR"/>
<dbReference type="PDBsum" id="7L3U"/>
<dbReference type="PDBsum" id="7L3Y"/>
<dbReference type="PDBsum" id="7SLH"/>
<dbReference type="PDBsum" id="7SLI"/>
<dbReference type="PDBsum" id="7SPE"/>
<dbReference type="PDBsum" id="7SPF"/>
<dbReference type="PDBsum" id="7SPG"/>
<dbReference type="PDBsum" id="7SPH"/>
<dbReference type="PDBsum" id="7VDN"/>
<dbReference type="PDBsum" id="7VUC"/>
<dbReference type="PDBsum" id="7VW4"/>
<dbReference type="PDBsum" id="7XC9"/>
<dbReference type="PDBsum" id="7XCF"/>
<dbReference type="PDBsum" id="7XCQ"/>
<dbReference type="PDBsum" id="7YLK"/>
<dbReference type="PDBsum" id="8EKO"/>
<dbReference type="PDBsum" id="8ESS"/>
<dbReference type="PDBsum" id="8ESU"/>
<dbReference type="PDBsum" id="8F9H"/>
<dbReference type="PDBsum" id="8F9I"/>
<dbReference type="PDBsum" id="8F9J"/>
<dbReference type="PDBsum" id="8F9N"/>
<dbReference type="PDBsum" id="8FB0"/>
<dbReference type="PDBsum" id="8FDJ"/>
<dbReference type="PDBsum" id="8J4K"/>
<dbReference type="PDBsum" id="8J4L"/>
<dbReference type="PDBsum" id="8KFH"/>
<dbReference type="PDBsum" id="8KFI"/>
<dbReference type="PDBsum" id="8KFJ"/>
<dbReference type="PDBsum" id="8QBA"/>
<dbReference type="PDBsum" id="8QBC"/>
<dbReference type="PDBsum" id="8XBJ"/>
<dbReference type="PDBsum" id="8XC2"/>
<dbReference type="BMRB" id="P02185"/>
<dbReference type="PCDDB" id="P02185"/>
<dbReference type="SMR" id="P02185"/>
<dbReference type="FunCoup" id="P02185">
    <property type="interactions" value="121"/>
</dbReference>
<dbReference type="STRING" id="9755.ENSPCTP00005016290"/>
<dbReference type="PeptideAtlas" id="P02185"/>
<dbReference type="GeneID" id="102975021"/>
<dbReference type="KEGG" id="pcad:102975021"/>
<dbReference type="CTD" id="4151"/>
<dbReference type="InParanoid" id="P02185"/>
<dbReference type="OrthoDB" id="6344802at2759"/>
<dbReference type="EvolutionaryTrace" id="P02185"/>
<dbReference type="Proteomes" id="UP000248484">
    <property type="component" value="Unplaced"/>
</dbReference>
<dbReference type="GO" id="GO:0070062">
    <property type="term" value="C:extracellular exosome"/>
    <property type="evidence" value="ECO:0007669"/>
    <property type="project" value="TreeGrafter"/>
</dbReference>
<dbReference type="GO" id="GO:0016528">
    <property type="term" value="C:sarcoplasm"/>
    <property type="evidence" value="ECO:0000250"/>
    <property type="project" value="UniProtKB"/>
</dbReference>
<dbReference type="GO" id="GO:0020037">
    <property type="term" value="F:heme binding"/>
    <property type="evidence" value="ECO:0007669"/>
    <property type="project" value="InterPro"/>
</dbReference>
<dbReference type="GO" id="GO:0046872">
    <property type="term" value="F:metal ion binding"/>
    <property type="evidence" value="ECO:0007669"/>
    <property type="project" value="UniProtKB-KW"/>
</dbReference>
<dbReference type="GO" id="GO:0098809">
    <property type="term" value="F:nitrite reductase activity"/>
    <property type="evidence" value="ECO:0000250"/>
    <property type="project" value="UniProtKB"/>
</dbReference>
<dbReference type="GO" id="GO:0019825">
    <property type="term" value="F:oxygen binding"/>
    <property type="evidence" value="ECO:0007669"/>
    <property type="project" value="InterPro"/>
</dbReference>
<dbReference type="GO" id="GO:0005344">
    <property type="term" value="F:oxygen carrier activity"/>
    <property type="evidence" value="ECO:0000250"/>
    <property type="project" value="UniProtKB"/>
</dbReference>
<dbReference type="GO" id="GO:0004601">
    <property type="term" value="F:peroxidase activity"/>
    <property type="evidence" value="ECO:0000250"/>
    <property type="project" value="UniProtKB"/>
</dbReference>
<dbReference type="GO" id="GO:0019430">
    <property type="term" value="P:removal of superoxide radicals"/>
    <property type="evidence" value="ECO:0000250"/>
    <property type="project" value="UniProtKB"/>
</dbReference>
<dbReference type="Gene3D" id="6.10.140.2100">
    <property type="match status" value="1"/>
</dbReference>
<dbReference type="Gene3D" id="6.10.140.2110">
    <property type="match status" value="1"/>
</dbReference>
<dbReference type="InterPro" id="IPR000971">
    <property type="entry name" value="Globin"/>
</dbReference>
<dbReference type="InterPro" id="IPR009050">
    <property type="entry name" value="Globin-like_sf"/>
</dbReference>
<dbReference type="InterPro" id="IPR002335">
    <property type="entry name" value="Myoglobin"/>
</dbReference>
<dbReference type="PANTHER" id="PTHR47132">
    <property type="entry name" value="MYOGLOBIN"/>
    <property type="match status" value="1"/>
</dbReference>
<dbReference type="PANTHER" id="PTHR47132:SF1">
    <property type="entry name" value="MYOGLOBIN"/>
    <property type="match status" value="1"/>
</dbReference>
<dbReference type="Pfam" id="PF00042">
    <property type="entry name" value="Globin"/>
    <property type="match status" value="1"/>
</dbReference>
<dbReference type="PRINTS" id="PR00613">
    <property type="entry name" value="MYOGLOBIN"/>
</dbReference>
<dbReference type="SUPFAM" id="SSF46458">
    <property type="entry name" value="Globin-like"/>
    <property type="match status" value="1"/>
</dbReference>
<dbReference type="PROSITE" id="PS01033">
    <property type="entry name" value="GLOBIN"/>
    <property type="match status" value="1"/>
</dbReference>
<accession>P02185</accession>
<accession>Q0KIY8</accession>
<keyword id="KW-0002">3D-structure</keyword>
<keyword id="KW-0963">Cytoplasm</keyword>
<keyword id="KW-0903">Direct protein sequencing</keyword>
<keyword id="KW-0349">Heme</keyword>
<keyword id="KW-0408">Iron</keyword>
<keyword id="KW-0479">Metal-binding</keyword>
<keyword id="KW-0514">Muscle protein</keyword>
<keyword id="KW-0560">Oxidoreductase</keyword>
<keyword id="KW-0561">Oxygen transport</keyword>
<keyword id="KW-0597">Phosphoprotein</keyword>
<keyword id="KW-1185">Reference proteome</keyword>
<keyword id="KW-0813">Transport</keyword>
<comment type="function">
    <text evidence="1">Monomeric heme protein which primary function is to store oxygen and facilitate its diffusion within muscle tissues. Reversibly binds oxygen through a pentacoordinated heme iron and enables its timely and efficient release as needed during periods of heightened demand. Depending on the oxidative conditions of tissues and cells, and in addition to its ability to bind oxygen, it also has a nitrite reductase activity whereby it regulates the production of bioactive nitric oxide. Under stress conditions, like hypoxia and anoxia, it also protects cells against reactive oxygen species thanks to its pseudoperoxidase activity.</text>
</comment>
<comment type="catalytic activity">
    <reaction evidence="1">
        <text>Fe(III)-heme b-[protein] + nitric oxide + H2O = Fe(II)-heme b-[protein] + nitrite + 2 H(+)</text>
        <dbReference type="Rhea" id="RHEA:77711"/>
        <dbReference type="Rhea" id="RHEA-COMP:18975"/>
        <dbReference type="Rhea" id="RHEA-COMP:18976"/>
        <dbReference type="ChEBI" id="CHEBI:15377"/>
        <dbReference type="ChEBI" id="CHEBI:15378"/>
        <dbReference type="ChEBI" id="CHEBI:16301"/>
        <dbReference type="ChEBI" id="CHEBI:16480"/>
        <dbReference type="ChEBI" id="CHEBI:55376"/>
        <dbReference type="ChEBI" id="CHEBI:60344"/>
    </reaction>
    <physiologicalReaction direction="right-to-left" evidence="1">
        <dbReference type="Rhea" id="RHEA:77713"/>
    </physiologicalReaction>
</comment>
<comment type="catalytic activity">
    <reaction evidence="1">
        <text>H2O2 + AH2 = A + 2 H2O</text>
        <dbReference type="Rhea" id="RHEA:30275"/>
        <dbReference type="ChEBI" id="CHEBI:13193"/>
        <dbReference type="ChEBI" id="CHEBI:15377"/>
        <dbReference type="ChEBI" id="CHEBI:16240"/>
        <dbReference type="ChEBI" id="CHEBI:17499"/>
    </reaction>
</comment>
<comment type="subunit">
    <text evidence="8">Monomeric.</text>
</comment>
<comment type="subcellular location">
    <subcellularLocation>
        <location evidence="1">Cytoplasm</location>
        <location evidence="1">Sarcoplasm</location>
    </subcellularLocation>
</comment>
<comment type="similarity">
    <text evidence="5">Belongs to the globin family.</text>
</comment>
<feature type="initiator methionine" description="Removed" evidence="9">
    <location>
        <position position="1"/>
    </location>
</feature>
<feature type="chain" id="PRO_0000053335" description="Myoglobin">
    <location>
        <begin position="2"/>
        <end position="154"/>
    </location>
</feature>
<feature type="domain" description="Globin" evidence="5">
    <location>
        <begin position="2"/>
        <end position="148"/>
    </location>
</feature>
<feature type="binding site" evidence="3">
    <location>
        <position position="65"/>
    </location>
    <ligand>
        <name>nitrite</name>
        <dbReference type="ChEBI" id="CHEBI:16301"/>
    </ligand>
</feature>
<feature type="binding site" evidence="5 6 12">
    <location>
        <position position="65"/>
    </location>
    <ligand>
        <name>O2</name>
        <dbReference type="ChEBI" id="CHEBI:15379"/>
    </ligand>
</feature>
<feature type="binding site" description="proximal binding residue" evidence="5 7 13 14">
    <location>
        <position position="94"/>
    </location>
    <ligand>
        <name>heme b</name>
        <dbReference type="ChEBI" id="CHEBI:60344"/>
    </ligand>
    <ligandPart>
        <name>Fe</name>
        <dbReference type="ChEBI" id="CHEBI:18248"/>
    </ligandPart>
</feature>
<feature type="modified residue" description="Phosphoserine" evidence="4">
    <location>
        <position position="4"/>
    </location>
</feature>
<feature type="modified residue" description="Phosphothreonine" evidence="2">
    <location>
        <position position="68"/>
    </location>
</feature>
<feature type="sequence variant" description="In metmyoglobin.">
    <original>G</original>
    <variation>A</variation>
    <location>
        <position position="122"/>
    </location>
</feature>
<feature type="sequence conflict" description="In Ref. 2; AA sequence." evidence="11" ref="2">
    <original>D</original>
    <variation>N</variation>
    <location>
        <position position="123"/>
    </location>
</feature>
<feature type="helix" evidence="16">
    <location>
        <begin position="5"/>
        <end position="18"/>
    </location>
</feature>
<feature type="helix" evidence="17">
    <location>
        <begin position="19"/>
        <end position="21"/>
    </location>
</feature>
<feature type="helix" evidence="16">
    <location>
        <begin position="22"/>
        <end position="36"/>
    </location>
</feature>
<feature type="helix" evidence="16">
    <location>
        <begin position="38"/>
        <end position="42"/>
    </location>
</feature>
<feature type="turn" evidence="16">
    <location>
        <begin position="45"/>
        <end position="49"/>
    </location>
</feature>
<feature type="helix" evidence="16">
    <location>
        <begin position="53"/>
        <end position="57"/>
    </location>
</feature>
<feature type="helix" evidence="16">
    <location>
        <begin position="60"/>
        <end position="77"/>
    </location>
</feature>
<feature type="turn" evidence="16">
    <location>
        <begin position="78"/>
        <end position="81"/>
    </location>
</feature>
<feature type="helix" evidence="16">
    <location>
        <begin position="84"/>
        <end position="96"/>
    </location>
</feature>
<feature type="turn" evidence="15">
    <location>
        <begin position="97"/>
        <end position="99"/>
    </location>
</feature>
<feature type="helix" evidence="16">
    <location>
        <begin position="102"/>
        <end position="119"/>
    </location>
</feature>
<feature type="helix" evidence="17">
    <location>
        <begin position="121"/>
        <end position="123"/>
    </location>
</feature>
<feature type="helix" evidence="16">
    <location>
        <begin position="126"/>
        <end position="149"/>
    </location>
</feature>
<feature type="turn" evidence="18">
    <location>
        <begin position="151"/>
        <end position="153"/>
    </location>
</feature>